<organism>
    <name type="scientific">Homo sapiens</name>
    <name type="common">Human</name>
    <dbReference type="NCBI Taxonomy" id="9606"/>
    <lineage>
        <taxon>Eukaryota</taxon>
        <taxon>Metazoa</taxon>
        <taxon>Chordata</taxon>
        <taxon>Craniata</taxon>
        <taxon>Vertebrata</taxon>
        <taxon>Euteleostomi</taxon>
        <taxon>Mammalia</taxon>
        <taxon>Eutheria</taxon>
        <taxon>Euarchontoglires</taxon>
        <taxon>Primates</taxon>
        <taxon>Haplorrhini</taxon>
        <taxon>Catarrhini</taxon>
        <taxon>Hominidae</taxon>
        <taxon>Homo</taxon>
    </lineage>
</organism>
<comment type="function">
    <text evidence="2 15 16 21 22">Functions as a receptor for membrane-bound ligands Jagged-1 (JAG1), Jagged-2 (JAG2) and Delta-1 (DLL1) to regulate cell-fate determination. Upon ligand activation through the released notch intracellular domain (NICD) it forms a transcriptional activator complex with RBPJ/RBPSUH and activates genes of the enhancer of split locus (PubMed:21378985, PubMed:21378989). Affects the implementation of differentiation, proliferation and apoptotic programs (By similarity). Involved in bone remodeling and homeostasis. In collaboration with RELA/p65 enhances NFATc1 promoter activity and positively regulates RANKL-induced osteoclast differentiation (PubMed:29149593). Positively regulates self-renewal of liver cancer cells (PubMed:25985737).</text>
</comment>
<comment type="subunit">
    <text evidence="1 8 9 12 14 21 22 23 24 25">Heterodimer of a C-terminal fragment N(TM) and an N-terminal fragment N(EC) which are probably linked by disulfide bonds (By similarity). Interacts with MAML1, MAML2 and MAML3 which act as transcriptional coactivators for NOTCH2. Interacts with RELA/p65 (By similarity). Interacts with HIF1AN. Interacts (via ANK repeats) with TCIM, the interaction inhibits the nuclear translocation of NOTCH2 N2ICD (PubMed:25985737). Interacts with CUL1, RBX1, SKP1 and FBXW7 that are SCF(FBXW7) E3 ubiquitin-protein ligase complex components (PubMed:29149593). Interacts with MINAR1; this interaction increases MINAR1 stability and function (PubMed:29329397). Interacts with NOTCH2NL (NOTCH2NLA, NOTCH2NLB and/or NOTCH2NLC); leading to enhance Notch signaling pathway in a non-cell-autonomous manner (PubMed:29856954). Interacts with MDK; this interaction mediates a nuclear accumulation of NOTCH2 and therefore activation of NOTCH2 signaling leading to interaction between HES1 and STAT3 (PubMed:18469519). Interacts with MINAR2 (PubMed:32954300).</text>
</comment>
<comment type="subcellular location">
    <molecule>Notch 2 extracellular truncation</molecule>
    <subcellularLocation>
        <location evidence="23 26">Cell membrane</location>
        <topology evidence="26">Single-pass type I membrane protein</topology>
    </subcellularLocation>
</comment>
<comment type="subcellular location">
    <molecule>Notch 2 intracellular domain</molecule>
    <subcellularLocation>
        <location evidence="21">Nucleus</location>
    </subcellularLocation>
    <subcellularLocation>
        <location evidence="21">Cytoplasm</location>
    </subcellularLocation>
    <text evidence="21">Following proteolytical processing NICD is translocated to the nucleus. Retained at the cytoplasm by TCIM (PubMed:25985737).</text>
</comment>
<comment type="tissue specificity">
    <text evidence="15">Expressed in the brain, heart, kidney, lung, skeletal muscle and liver. Ubiquitously expressed in the embryo.</text>
</comment>
<comment type="PTM">
    <text evidence="2 3">Synthesized in the endoplasmic reticulum as an inactive form which is proteolytically cleaved by a furin-like convertase in the trans-Golgi network before it reaches the plasma membrane to yield an active, ligand-accessible form (By similarity). Cleavage results in a C-terminal fragment N(TM) and a N-terminal fragment N(EC) (By similarity). Following ligand binding, it is cleaved by TNF-alpha converting enzyme (TACE) to yield a membrane-associated intermediate fragment called notch extracellular truncation (NEXT) (By similarity). This fragment is then cleaved by presenilin dependent gamma-secretase to release a notch-derived peptide containing the intracellular domain (NICD) from the membrane (By similarity).</text>
</comment>
<comment type="PTM">
    <text evidence="13">Hydroxylated by HIF1AN.</text>
</comment>
<comment type="PTM">
    <text evidence="2">Can be either O-glucosylated or O-xylosylated at Ser-613 by POGLUT1.</text>
</comment>
<comment type="PTM">
    <text evidence="22">Phosphorylated by GSK3. GSK3-mediated phosphorylation is necessary for NOTCH2 recognition by FBXW7, ubiquitination and degradation via the ubiquitin proteasome pathway.</text>
</comment>
<comment type="disease" evidence="10">
    <disease id="DI-00072">
        <name>Alagille syndrome 2</name>
        <acronym>ALGS2</acronym>
        <description>A form of Alagille syndrome, an autosomal dominant multisystem disorder. It is clinically defined by hepatic bile duct paucity and cholestasis in association with cardiac, skeletal, and ophthalmologic manifestations. There are characteristic facial features and less frequent clinical involvement of the renal and vascular systems.</description>
        <dbReference type="MIM" id="610205"/>
    </disease>
    <text>The disease is caused by variants affecting the gene represented in this entry.</text>
</comment>
<comment type="disease" evidence="15 16 17 18 19 20 22">
    <disease id="DI-02985">
        <name>Hajdu-Cheney syndrome</name>
        <acronym>HJCYS</acronym>
        <description>A rare, autosomal dominant skeletal disorder characterized by the association of facial anomalies, acro-osteolysis, general osteoporosis, insufficient ossification of the skull, and periodontal disease (premature loss of permanent teeth). Other features include cleft palate, congenital heart defects, polycystic kidneys, orthopedic problems and anomalies of the genitalia, intestines and eyes.</description>
        <dbReference type="MIM" id="102500"/>
    </disease>
    <text evidence="16 22">The disease is caused by variants affecting the gene represented in this entry. NOTCH2 nonsense and frameshift mutations associated with Hajdu-Cheney syndrome cluster to the last coding exon of the gene. Mutant mRNA products escape nonsense-mediated decay and the resulting truncated NOTCH2 proteins act in a gain-of-function manner (PubMed:21378989). The pathological mechanism at cellular level involves disruption of a high affinity degron recognized by FBXW7 at the C-terminus, loss of interaction with FBXW7, reduced ubiquitination and degradation, and increased NOTCH2 levels. Bone marrow cells derived from HJCYS patients have an enhanced capacity of osteoclastogenesis due to sustained NOTCH2 activity (PubMed:29149593).</text>
</comment>
<comment type="similarity">
    <text evidence="28">Belongs to the NOTCH family.</text>
</comment>
<comment type="online information" name="Atlas of Genetics and Cytogenetics in Oncology and Haematology">
    <link uri="https://atlasgeneticsoncology.org/gene/41556/NOTCH2"/>
</comment>
<gene>
    <name evidence="29" type="primary">NOTCH2</name>
</gene>
<dbReference type="EMBL" id="AF308601">
    <property type="protein sequence ID" value="AAA36377.2"/>
    <property type="molecule type" value="mRNA"/>
</dbReference>
<dbReference type="EMBL" id="AF315356">
    <property type="protein sequence ID" value="AAG37073.1"/>
    <property type="molecule type" value="mRNA"/>
</dbReference>
<dbReference type="EMBL" id="AL359752">
    <property type="protein sequence ID" value="CAI18974.1"/>
    <property type="molecule type" value="Genomic_DNA"/>
</dbReference>
<dbReference type="EMBL" id="AL512503">
    <property type="protein sequence ID" value="CAI18974.1"/>
    <property type="status" value="JOINED"/>
    <property type="molecule type" value="Genomic_DNA"/>
</dbReference>
<dbReference type="EMBL" id="AL596222">
    <property type="protein sequence ID" value="CAI18974.1"/>
    <property type="status" value="JOINED"/>
    <property type="molecule type" value="Genomic_DNA"/>
</dbReference>
<dbReference type="EMBL" id="AL512503">
    <property type="protein sequence ID" value="CAH72483.1"/>
    <property type="molecule type" value="Genomic_DNA"/>
</dbReference>
<dbReference type="EMBL" id="AL359752">
    <property type="protein sequence ID" value="CAH72483.1"/>
    <property type="status" value="JOINED"/>
    <property type="molecule type" value="Genomic_DNA"/>
</dbReference>
<dbReference type="EMBL" id="AL596222">
    <property type="protein sequence ID" value="CAH72483.1"/>
    <property type="status" value="JOINED"/>
    <property type="molecule type" value="Genomic_DNA"/>
</dbReference>
<dbReference type="EMBL" id="AL596222">
    <property type="protein sequence ID" value="CAH70182.1"/>
    <property type="molecule type" value="Genomic_DNA"/>
</dbReference>
<dbReference type="EMBL" id="AL359752">
    <property type="protein sequence ID" value="CAH70182.1"/>
    <property type="status" value="JOINED"/>
    <property type="molecule type" value="Genomic_DNA"/>
</dbReference>
<dbReference type="EMBL" id="AL512503">
    <property type="protein sequence ID" value="CAH70182.1"/>
    <property type="status" value="JOINED"/>
    <property type="molecule type" value="Genomic_DNA"/>
</dbReference>
<dbReference type="EMBL" id="U77493">
    <property type="protein sequence ID" value="AAB19224.1"/>
    <property type="molecule type" value="mRNA"/>
</dbReference>
<dbReference type="CCDS" id="CCDS908.1"/>
<dbReference type="RefSeq" id="NP_001186930.1">
    <property type="nucleotide sequence ID" value="NM_001200001.1"/>
</dbReference>
<dbReference type="RefSeq" id="NP_077719.2">
    <property type="nucleotide sequence ID" value="NM_024408.3"/>
</dbReference>
<dbReference type="PDB" id="2OO4">
    <property type="method" value="X-ray"/>
    <property type="resolution" value="2.00 A"/>
    <property type="chains" value="A/B=1423-1677"/>
</dbReference>
<dbReference type="PDB" id="5MWB">
    <property type="method" value="X-ray"/>
    <property type="resolution" value="1.86 A"/>
    <property type="chains" value="A=414-532"/>
</dbReference>
<dbReference type="PDBsum" id="2OO4"/>
<dbReference type="PDBsum" id="5MWB"/>
<dbReference type="SMR" id="Q04721"/>
<dbReference type="BioGRID" id="110915">
    <property type="interactions" value="490"/>
</dbReference>
<dbReference type="CORUM" id="Q04721"/>
<dbReference type="ELM" id="Q04721"/>
<dbReference type="FunCoup" id="Q04721">
    <property type="interactions" value="1308"/>
</dbReference>
<dbReference type="IntAct" id="Q04721">
    <property type="interactions" value="277"/>
</dbReference>
<dbReference type="MINT" id="Q04721"/>
<dbReference type="STRING" id="9606.ENSP00000256646"/>
<dbReference type="BindingDB" id="Q04721"/>
<dbReference type="ChEMBL" id="CHEMBL3407320"/>
<dbReference type="GuidetoPHARMACOLOGY" id="2859"/>
<dbReference type="GlyConnect" id="1553">
    <property type="glycosylation" value="2 N-Linked glycans (1 site)"/>
</dbReference>
<dbReference type="GlyCosmos" id="Q04721">
    <property type="glycosylation" value="11 sites, 4 glycans"/>
</dbReference>
<dbReference type="GlyGen" id="Q04721">
    <property type="glycosylation" value="18 sites, 5 N-linked glycans (3 sites), 3 O-linked glycans (10 sites)"/>
</dbReference>
<dbReference type="iPTMnet" id="Q04721"/>
<dbReference type="PhosphoSitePlus" id="Q04721"/>
<dbReference type="SwissPalm" id="Q04721"/>
<dbReference type="BioMuta" id="NOTCH2"/>
<dbReference type="DMDM" id="143811429"/>
<dbReference type="jPOST" id="Q04721"/>
<dbReference type="MassIVE" id="Q04721"/>
<dbReference type="PaxDb" id="9606-ENSP00000256646"/>
<dbReference type="PeptideAtlas" id="Q04721"/>
<dbReference type="ProteomicsDB" id="58265"/>
<dbReference type="Pumba" id="Q04721"/>
<dbReference type="ABCD" id="Q04721">
    <property type="antibodies" value="25 sequenced antibodies"/>
</dbReference>
<dbReference type="Antibodypedia" id="20208">
    <property type="antibodies" value="665 antibodies from 45 providers"/>
</dbReference>
<dbReference type="DNASU" id="4853"/>
<dbReference type="Ensembl" id="ENST00000256646.7">
    <property type="protein sequence ID" value="ENSP00000256646.2"/>
    <property type="gene ID" value="ENSG00000134250.21"/>
</dbReference>
<dbReference type="GeneID" id="4853"/>
<dbReference type="KEGG" id="hsa:4853"/>
<dbReference type="MANE-Select" id="ENST00000256646.7">
    <property type="protein sequence ID" value="ENSP00000256646.2"/>
    <property type="RefSeq nucleotide sequence ID" value="NM_024408.4"/>
    <property type="RefSeq protein sequence ID" value="NP_077719.2"/>
</dbReference>
<dbReference type="UCSC" id="uc001eik.4">
    <property type="organism name" value="human"/>
</dbReference>
<dbReference type="AGR" id="HGNC:7882"/>
<dbReference type="CTD" id="4853"/>
<dbReference type="DisGeNET" id="4853"/>
<dbReference type="GeneCards" id="NOTCH2"/>
<dbReference type="GeneReviews" id="NOTCH2"/>
<dbReference type="HGNC" id="HGNC:7882">
    <property type="gene designation" value="NOTCH2"/>
</dbReference>
<dbReference type="HPA" id="ENSG00000134250">
    <property type="expression patterns" value="Low tissue specificity"/>
</dbReference>
<dbReference type="MalaCards" id="NOTCH2"/>
<dbReference type="MIM" id="102500">
    <property type="type" value="phenotype"/>
</dbReference>
<dbReference type="MIM" id="600275">
    <property type="type" value="gene"/>
</dbReference>
<dbReference type="MIM" id="610205">
    <property type="type" value="phenotype"/>
</dbReference>
<dbReference type="neXtProt" id="NX_Q04721"/>
<dbReference type="OpenTargets" id="ENSG00000134250"/>
<dbReference type="Orphanet" id="261629">
    <property type="disease" value="Alagille syndrome due to a NOTCH2 point mutation"/>
</dbReference>
<dbReference type="Orphanet" id="955">
    <property type="disease" value="Hajdu-Cheney syndrome"/>
</dbReference>
<dbReference type="PharmGKB" id="PA31684"/>
<dbReference type="VEuPathDB" id="HostDB:ENSG00000134250"/>
<dbReference type="eggNOG" id="KOG1217">
    <property type="taxonomic scope" value="Eukaryota"/>
</dbReference>
<dbReference type="GeneTree" id="ENSGT00940000155030"/>
<dbReference type="HOGENOM" id="CLU_000576_0_0_1"/>
<dbReference type="InParanoid" id="Q04721"/>
<dbReference type="OMA" id="AHMSEPP"/>
<dbReference type="OrthoDB" id="283575at2759"/>
<dbReference type="PAN-GO" id="Q04721">
    <property type="GO annotations" value="5 GO annotations based on evolutionary models"/>
</dbReference>
<dbReference type="PhylomeDB" id="Q04721"/>
<dbReference type="TreeFam" id="TF351641"/>
<dbReference type="PathwayCommons" id="Q04721"/>
<dbReference type="Reactome" id="R-HSA-1912399">
    <property type="pathway name" value="Pre-NOTCH Processing in the Endoplasmic Reticulum"/>
</dbReference>
<dbReference type="Reactome" id="R-HSA-1912408">
    <property type="pathway name" value="Pre-NOTCH Transcription and Translation"/>
</dbReference>
<dbReference type="Reactome" id="R-HSA-1912420">
    <property type="pathway name" value="Pre-NOTCH Processing in Golgi"/>
</dbReference>
<dbReference type="Reactome" id="R-HSA-2197563">
    <property type="pathway name" value="NOTCH2 intracellular domain regulates transcription"/>
</dbReference>
<dbReference type="Reactome" id="R-HSA-2979096">
    <property type="pathway name" value="NOTCH2 Activation and Transmission of Signal to the Nucleus"/>
</dbReference>
<dbReference type="Reactome" id="R-HSA-350054">
    <property type="pathway name" value="Notch-HLH transcription pathway"/>
</dbReference>
<dbReference type="Reactome" id="R-HSA-5083630">
    <property type="pathway name" value="Defective LFNG causes SCDO3"/>
</dbReference>
<dbReference type="Reactome" id="R-HSA-9013695">
    <property type="pathway name" value="NOTCH4 Intracellular Domain Regulates Transcription"/>
</dbReference>
<dbReference type="SignaLink" id="Q04721"/>
<dbReference type="SIGNOR" id="Q04721"/>
<dbReference type="BioGRID-ORCS" id="4853">
    <property type="hits" value="13 hits in 1161 CRISPR screens"/>
</dbReference>
<dbReference type="ChiTaRS" id="NOTCH2">
    <property type="organism name" value="human"/>
</dbReference>
<dbReference type="EvolutionaryTrace" id="Q04721"/>
<dbReference type="GeneWiki" id="Notch-2"/>
<dbReference type="GenomeRNAi" id="4853"/>
<dbReference type="Pharos" id="Q04721">
    <property type="development level" value="Tchem"/>
</dbReference>
<dbReference type="PRO" id="PR:Q04721"/>
<dbReference type="Proteomes" id="UP000005640">
    <property type="component" value="Chromosome 1"/>
</dbReference>
<dbReference type="RNAct" id="Q04721">
    <property type="molecule type" value="protein"/>
</dbReference>
<dbReference type="Bgee" id="ENSG00000134250">
    <property type="expression patterns" value="Expressed in pigmented layer of retina and 205 other cell types or tissues"/>
</dbReference>
<dbReference type="ExpressionAtlas" id="Q04721">
    <property type="expression patterns" value="baseline and differential"/>
</dbReference>
<dbReference type="GO" id="GO:0009986">
    <property type="term" value="C:cell surface"/>
    <property type="evidence" value="ECO:0000314"/>
    <property type="project" value="UniProtKB"/>
</dbReference>
<dbReference type="GO" id="GO:0005929">
    <property type="term" value="C:cilium"/>
    <property type="evidence" value="ECO:0007669"/>
    <property type="project" value="Ensembl"/>
</dbReference>
<dbReference type="GO" id="GO:0005789">
    <property type="term" value="C:endoplasmic reticulum membrane"/>
    <property type="evidence" value="ECO:0000304"/>
    <property type="project" value="Reactome"/>
</dbReference>
<dbReference type="GO" id="GO:0005576">
    <property type="term" value="C:extracellular region"/>
    <property type="evidence" value="ECO:0000304"/>
    <property type="project" value="Reactome"/>
</dbReference>
<dbReference type="GO" id="GO:0005794">
    <property type="term" value="C:Golgi apparatus"/>
    <property type="evidence" value="ECO:0000314"/>
    <property type="project" value="HPA"/>
</dbReference>
<dbReference type="GO" id="GO:0000139">
    <property type="term" value="C:Golgi membrane"/>
    <property type="evidence" value="ECO:0000304"/>
    <property type="project" value="Reactome"/>
</dbReference>
<dbReference type="GO" id="GO:0016020">
    <property type="term" value="C:membrane"/>
    <property type="evidence" value="ECO:0007005"/>
    <property type="project" value="UniProtKB"/>
</dbReference>
<dbReference type="GO" id="GO:0005654">
    <property type="term" value="C:nucleoplasm"/>
    <property type="evidence" value="ECO:0000314"/>
    <property type="project" value="HPA"/>
</dbReference>
<dbReference type="GO" id="GO:0005634">
    <property type="term" value="C:nucleus"/>
    <property type="evidence" value="ECO:0000314"/>
    <property type="project" value="UniProtKB"/>
</dbReference>
<dbReference type="GO" id="GO:0005886">
    <property type="term" value="C:plasma membrane"/>
    <property type="evidence" value="ECO:0000314"/>
    <property type="project" value="UniProtKB"/>
</dbReference>
<dbReference type="GO" id="GO:0043235">
    <property type="term" value="C:receptor complex"/>
    <property type="evidence" value="ECO:0000314"/>
    <property type="project" value="MGI"/>
</dbReference>
<dbReference type="GO" id="GO:0005509">
    <property type="term" value="F:calcium ion binding"/>
    <property type="evidence" value="ECO:0007669"/>
    <property type="project" value="InterPro"/>
</dbReference>
<dbReference type="GO" id="GO:0000987">
    <property type="term" value="F:cis-regulatory region sequence-specific DNA binding"/>
    <property type="evidence" value="ECO:0000314"/>
    <property type="project" value="BHF-UCL"/>
</dbReference>
<dbReference type="GO" id="GO:0001228">
    <property type="term" value="F:DNA-binding transcription activator activity, RNA polymerase II-specific"/>
    <property type="evidence" value="ECO:0000314"/>
    <property type="project" value="BHF-UCL"/>
</dbReference>
<dbReference type="GO" id="GO:0019899">
    <property type="term" value="F:enzyme binding"/>
    <property type="evidence" value="ECO:0007669"/>
    <property type="project" value="Ensembl"/>
</dbReference>
<dbReference type="GO" id="GO:0051059">
    <property type="term" value="F:NF-kappaB binding"/>
    <property type="evidence" value="ECO:0007669"/>
    <property type="project" value="Ensembl"/>
</dbReference>
<dbReference type="GO" id="GO:0038023">
    <property type="term" value="F:signaling receptor activity"/>
    <property type="evidence" value="ECO:0000303"/>
    <property type="project" value="UniProtKB"/>
</dbReference>
<dbReference type="GO" id="GO:0009887">
    <property type="term" value="P:animal organ morphogenesis"/>
    <property type="evidence" value="ECO:0000270"/>
    <property type="project" value="UniProtKB"/>
</dbReference>
<dbReference type="GO" id="GO:0006915">
    <property type="term" value="P:apoptotic process"/>
    <property type="evidence" value="ECO:0000304"/>
    <property type="project" value="UniProtKB"/>
</dbReference>
<dbReference type="GO" id="GO:0060413">
    <property type="term" value="P:atrial septum morphogenesis"/>
    <property type="evidence" value="ECO:0000315"/>
    <property type="project" value="BHF-UCL"/>
</dbReference>
<dbReference type="GO" id="GO:0003162">
    <property type="term" value="P:atrioventricular node development"/>
    <property type="evidence" value="ECO:0000303"/>
    <property type="project" value="BHF-UCL"/>
</dbReference>
<dbReference type="GO" id="GO:0030509">
    <property type="term" value="P:BMP signaling pathway"/>
    <property type="evidence" value="ECO:0007669"/>
    <property type="project" value="Ensembl"/>
</dbReference>
<dbReference type="GO" id="GO:0046849">
    <property type="term" value="P:bone remodeling"/>
    <property type="evidence" value="ECO:0000315"/>
    <property type="project" value="UniProtKB"/>
</dbReference>
<dbReference type="GO" id="GO:0001709">
    <property type="term" value="P:cell fate determination"/>
    <property type="evidence" value="ECO:0000304"/>
    <property type="project" value="UniProtKB"/>
</dbReference>
<dbReference type="GO" id="GO:0071228">
    <property type="term" value="P:cellular response to tumor cell"/>
    <property type="evidence" value="ECO:0000314"/>
    <property type="project" value="UniProtKB"/>
</dbReference>
<dbReference type="GO" id="GO:1990705">
    <property type="term" value="P:cholangiocyte proliferation"/>
    <property type="evidence" value="ECO:0007669"/>
    <property type="project" value="Ensembl"/>
</dbReference>
<dbReference type="GO" id="GO:0061073">
    <property type="term" value="P:ciliary body morphogenesis"/>
    <property type="evidence" value="ECO:0007669"/>
    <property type="project" value="Ensembl"/>
</dbReference>
<dbReference type="GO" id="GO:0042742">
    <property type="term" value="P:defense response to bacterium"/>
    <property type="evidence" value="ECO:0007669"/>
    <property type="project" value="Ensembl"/>
</dbReference>
<dbReference type="GO" id="GO:0030326">
    <property type="term" value="P:embryonic limb morphogenesis"/>
    <property type="evidence" value="ECO:0007669"/>
    <property type="project" value="Ensembl"/>
</dbReference>
<dbReference type="GO" id="GO:0072104">
    <property type="term" value="P:glomerular capillary formation"/>
    <property type="evidence" value="ECO:0007669"/>
    <property type="project" value="Ensembl"/>
</dbReference>
<dbReference type="GO" id="GO:0001947">
    <property type="term" value="P:heart looping"/>
    <property type="evidence" value="ECO:0007669"/>
    <property type="project" value="Ensembl"/>
</dbReference>
<dbReference type="GO" id="GO:0030097">
    <property type="term" value="P:hemopoiesis"/>
    <property type="evidence" value="ECO:0000304"/>
    <property type="project" value="UniProtKB"/>
</dbReference>
<dbReference type="GO" id="GO:0072574">
    <property type="term" value="P:hepatocyte proliferation"/>
    <property type="evidence" value="ECO:0007669"/>
    <property type="project" value="Ensembl"/>
</dbReference>
<dbReference type="GO" id="GO:0006959">
    <property type="term" value="P:humoral immune response"/>
    <property type="evidence" value="ECO:0007669"/>
    <property type="project" value="Ensembl"/>
</dbReference>
<dbReference type="GO" id="GO:0001701">
    <property type="term" value="P:in utero embryonic development"/>
    <property type="evidence" value="ECO:0007669"/>
    <property type="project" value="Ensembl"/>
</dbReference>
<dbReference type="GO" id="GO:0002437">
    <property type="term" value="P:inflammatory response to antigenic stimulus"/>
    <property type="evidence" value="ECO:0007669"/>
    <property type="project" value="Ensembl"/>
</dbReference>
<dbReference type="GO" id="GO:0035556">
    <property type="term" value="P:intracellular signal transduction"/>
    <property type="evidence" value="ECO:0000314"/>
    <property type="project" value="UniProtKB"/>
</dbReference>
<dbReference type="GO" id="GO:0035622">
    <property type="term" value="P:intrahepatic bile duct development"/>
    <property type="evidence" value="ECO:0007669"/>
    <property type="project" value="Ensembl"/>
</dbReference>
<dbReference type="GO" id="GO:0070986">
    <property type="term" value="P:left/right axis specification"/>
    <property type="evidence" value="ECO:0007669"/>
    <property type="project" value="Ensembl"/>
</dbReference>
<dbReference type="GO" id="GO:0002315">
    <property type="term" value="P:marginal zone B cell differentiation"/>
    <property type="evidence" value="ECO:0000250"/>
    <property type="project" value="UniProtKB"/>
</dbReference>
<dbReference type="GO" id="GO:0002011">
    <property type="term" value="P:morphogenesis of an epithelial sheet"/>
    <property type="evidence" value="ECO:0007669"/>
    <property type="project" value="Ensembl"/>
</dbReference>
<dbReference type="GO" id="GO:0035264">
    <property type="term" value="P:multicellular organism growth"/>
    <property type="evidence" value="ECO:0007669"/>
    <property type="project" value="Ensembl"/>
</dbReference>
<dbReference type="GO" id="GO:0043011">
    <property type="term" value="P:myeloid dendritic cell differentiation"/>
    <property type="evidence" value="ECO:0007669"/>
    <property type="project" value="Ensembl"/>
</dbReference>
<dbReference type="GO" id="GO:0043066">
    <property type="term" value="P:negative regulation of apoptotic process"/>
    <property type="evidence" value="ECO:0000304"/>
    <property type="project" value="UniProtKB"/>
</dbReference>
<dbReference type="GO" id="GO:0010629">
    <property type="term" value="P:negative regulation of gene expression"/>
    <property type="evidence" value="ECO:0000314"/>
    <property type="project" value="UniProtKB"/>
</dbReference>
<dbReference type="GO" id="GO:0000122">
    <property type="term" value="P:negative regulation of transcription by RNA polymerase II"/>
    <property type="evidence" value="ECO:0007669"/>
    <property type="project" value="Ensembl"/>
</dbReference>
<dbReference type="GO" id="GO:0007399">
    <property type="term" value="P:nervous system development"/>
    <property type="evidence" value="ECO:0000303"/>
    <property type="project" value="UniProtKB"/>
</dbReference>
<dbReference type="GO" id="GO:0007219">
    <property type="term" value="P:Notch signaling pathway"/>
    <property type="evidence" value="ECO:0000314"/>
    <property type="project" value="UniProtKB"/>
</dbReference>
<dbReference type="GO" id="GO:0060674">
    <property type="term" value="P:placenta blood vessel development"/>
    <property type="evidence" value="ECO:0007669"/>
    <property type="project" value="Ensembl"/>
</dbReference>
<dbReference type="GO" id="GO:0072015">
    <property type="term" value="P:podocyte development"/>
    <property type="evidence" value="ECO:0007669"/>
    <property type="project" value="Ensembl"/>
</dbReference>
<dbReference type="GO" id="GO:0043065">
    <property type="term" value="P:positive regulation of apoptotic process"/>
    <property type="evidence" value="ECO:0007669"/>
    <property type="project" value="Ensembl"/>
</dbReference>
<dbReference type="GO" id="GO:0030513">
    <property type="term" value="P:positive regulation of BMP signaling pathway"/>
    <property type="evidence" value="ECO:0007669"/>
    <property type="project" value="Ensembl"/>
</dbReference>
<dbReference type="GO" id="GO:0070374">
    <property type="term" value="P:positive regulation of ERK1 and ERK2 cascade"/>
    <property type="evidence" value="ECO:0000314"/>
    <property type="project" value="UniProtKB"/>
</dbReference>
<dbReference type="GO" id="GO:0010838">
    <property type="term" value="P:positive regulation of keratinocyte proliferation"/>
    <property type="evidence" value="ECO:0000314"/>
    <property type="project" value="UniProtKB"/>
</dbReference>
<dbReference type="GO" id="GO:1902895">
    <property type="term" value="P:positive regulation of miRNA transcription"/>
    <property type="evidence" value="ECO:0000315"/>
    <property type="project" value="BHF-UCL"/>
</dbReference>
<dbReference type="GO" id="GO:0045672">
    <property type="term" value="P:positive regulation of osteoclast differentiation"/>
    <property type="evidence" value="ECO:0007669"/>
    <property type="project" value="Ensembl"/>
</dbReference>
<dbReference type="GO" id="GO:0046579">
    <property type="term" value="P:positive regulation of Ras protein signal transduction"/>
    <property type="evidence" value="ECO:0000314"/>
    <property type="project" value="UniProtKB"/>
</dbReference>
<dbReference type="GO" id="GO:0051152">
    <property type="term" value="P:positive regulation of smooth muscle cell differentiation"/>
    <property type="evidence" value="ECO:0000314"/>
    <property type="project" value="BHF-UCL"/>
</dbReference>
<dbReference type="GO" id="GO:0045944">
    <property type="term" value="P:positive regulation of transcription by RNA polymerase II"/>
    <property type="evidence" value="ECO:0000314"/>
    <property type="project" value="BHF-UCL"/>
</dbReference>
<dbReference type="GO" id="GO:0072014">
    <property type="term" value="P:proximal tubule development"/>
    <property type="evidence" value="ECO:0007669"/>
    <property type="project" value="Ensembl"/>
</dbReference>
<dbReference type="GO" id="GO:0003184">
    <property type="term" value="P:pulmonary valve morphogenesis"/>
    <property type="evidence" value="ECO:0000315"/>
    <property type="project" value="BHF-UCL"/>
</dbReference>
<dbReference type="GO" id="GO:2001204">
    <property type="term" value="P:regulation of osteoclast development"/>
    <property type="evidence" value="ECO:0000315"/>
    <property type="project" value="UniProtKB"/>
</dbReference>
<dbReference type="GO" id="GO:0042060">
    <property type="term" value="P:wound healing"/>
    <property type="evidence" value="ECO:0007669"/>
    <property type="project" value="Ensembl"/>
</dbReference>
<dbReference type="CDD" id="cd00054">
    <property type="entry name" value="EGF_CA"/>
    <property type="match status" value="27"/>
</dbReference>
<dbReference type="CDD" id="cd21703">
    <property type="entry name" value="JMTM_Notch2"/>
    <property type="match status" value="1"/>
</dbReference>
<dbReference type="FunFam" id="2.10.25.10:FF:000151">
    <property type="entry name" value="FAT atypical cadherin 4"/>
    <property type="match status" value="1"/>
</dbReference>
<dbReference type="FunFam" id="1.25.40.20:FF:000005">
    <property type="entry name" value="Neurogenic locus notch 1"/>
    <property type="match status" value="1"/>
</dbReference>
<dbReference type="FunFam" id="2.10.25.10:FF:000004">
    <property type="entry name" value="Neurogenic locus notch 1"/>
    <property type="match status" value="8"/>
</dbReference>
<dbReference type="FunFam" id="2.10.25.10:FF:000080">
    <property type="entry name" value="Neurogenic locus notch 1"/>
    <property type="match status" value="2"/>
</dbReference>
<dbReference type="FunFam" id="2.10.25.10:FF:000136">
    <property type="entry name" value="Neurogenic locus notch 1"/>
    <property type="match status" value="1"/>
</dbReference>
<dbReference type="FunFam" id="2.10.25.10:FF:000279">
    <property type="entry name" value="Neurogenic locus notch 1"/>
    <property type="match status" value="1"/>
</dbReference>
<dbReference type="FunFam" id="3.30.300.320:FF:000001">
    <property type="entry name" value="Neurogenic locus notch 1"/>
    <property type="match status" value="1"/>
</dbReference>
<dbReference type="FunFam" id="2.10.25.10:FF:000393">
    <property type="entry name" value="Neurogenic locus notch homolog protein 2"/>
    <property type="match status" value="1"/>
</dbReference>
<dbReference type="FunFam" id="2.10.25.10:FF:000423">
    <property type="entry name" value="Neurogenic locus notch homolog protein 2"/>
    <property type="match status" value="1"/>
</dbReference>
<dbReference type="FunFam" id="2.10.25.10:FF:000392">
    <property type="entry name" value="neurogenic locus notch homolog protein 2"/>
    <property type="match status" value="1"/>
</dbReference>
<dbReference type="FunFam" id="2.10.25.10:FF:000060">
    <property type="entry name" value="Neurogenic locus notch protein 1"/>
    <property type="match status" value="1"/>
</dbReference>
<dbReference type="FunFam" id="2.10.25.10:FF:000092">
    <property type="entry name" value="Neurogenic locus notch protein 1"/>
    <property type="match status" value="1"/>
</dbReference>
<dbReference type="FunFam" id="2.10.25.10:FF:000127">
    <property type="entry name" value="Neurogenic locus notch protein 1"/>
    <property type="match status" value="2"/>
</dbReference>
<dbReference type="FunFam" id="2.10.25.10:FF:000157">
    <property type="entry name" value="Neurogenic locus notch protein 1"/>
    <property type="match status" value="1"/>
</dbReference>
<dbReference type="FunFam" id="2.10.25.10:FF:000253">
    <property type="entry name" value="Neurogenic locus notch protein 1"/>
    <property type="match status" value="1"/>
</dbReference>
<dbReference type="FunFam" id="3.30.70.3310:FF:000001">
    <property type="entry name" value="Neurogenic locus notch protein 2"/>
    <property type="match status" value="1"/>
</dbReference>
<dbReference type="FunFam" id="2.10.25.10:FF:000125">
    <property type="entry name" value="Neurogenic locus notch protein-like"/>
    <property type="match status" value="1"/>
</dbReference>
<dbReference type="FunFam" id="2.10.25.10:FF:000705">
    <property type="entry name" value="Notch 2"/>
    <property type="match status" value="1"/>
</dbReference>
<dbReference type="FunFam" id="2.10.25.10:FF:000109">
    <property type="entry name" value="Notch homolog 4, [Drosophila]"/>
    <property type="match status" value="1"/>
</dbReference>
<dbReference type="FunFam" id="2.10.25.10:FF:000299">
    <property type="entry name" value="Notch receptor 3"/>
    <property type="match status" value="1"/>
</dbReference>
<dbReference type="FunFam" id="2.10.25.10:FF:000516">
    <property type="entry name" value="Notch receptor 3"/>
    <property type="match status" value="1"/>
</dbReference>
<dbReference type="FunFam" id="2.10.25.10:FF:000522">
    <property type="entry name" value="Notch receptor 3"/>
    <property type="match status" value="1"/>
</dbReference>
<dbReference type="FunFam" id="2.10.25.10:FF:000095">
    <property type="entry name" value="Notch, isoform B"/>
    <property type="match status" value="1"/>
</dbReference>
<dbReference type="FunFam" id="2.10.25.10:FF:000143">
    <property type="entry name" value="Protein crumbs 1"/>
    <property type="match status" value="1"/>
</dbReference>
<dbReference type="FunFam" id="2.10.25.10:FF:000471">
    <property type="entry name" value="Protein lin-12"/>
    <property type="match status" value="1"/>
</dbReference>
<dbReference type="FunFam" id="2.10.25.10:FF:000146">
    <property type="entry name" value="Putative neurogenic locus notch"/>
    <property type="match status" value="1"/>
</dbReference>
<dbReference type="FunFam" id="2.10.25.10:FF:000309">
    <property type="entry name" value="Uncharacterized protein, isoform A"/>
    <property type="match status" value="1"/>
</dbReference>
<dbReference type="Gene3D" id="3.30.300.320">
    <property type="match status" value="1"/>
</dbReference>
<dbReference type="Gene3D" id="3.30.70.3310">
    <property type="match status" value="1"/>
</dbReference>
<dbReference type="Gene3D" id="1.25.40.20">
    <property type="entry name" value="Ankyrin repeat-containing domain"/>
    <property type="match status" value="1"/>
</dbReference>
<dbReference type="Gene3D" id="2.10.25.10">
    <property type="entry name" value="Laminin"/>
    <property type="match status" value="35"/>
</dbReference>
<dbReference type="IDEAL" id="IID00463"/>
<dbReference type="InterPro" id="IPR002110">
    <property type="entry name" value="Ankyrin_rpt"/>
</dbReference>
<dbReference type="InterPro" id="IPR036770">
    <property type="entry name" value="Ankyrin_rpt-contain_sf"/>
</dbReference>
<dbReference type="InterPro" id="IPR001881">
    <property type="entry name" value="EGF-like_Ca-bd_dom"/>
</dbReference>
<dbReference type="InterPro" id="IPR013032">
    <property type="entry name" value="EGF-like_CS"/>
</dbReference>
<dbReference type="InterPro" id="IPR000742">
    <property type="entry name" value="EGF-like_dom"/>
</dbReference>
<dbReference type="InterPro" id="IPR000152">
    <property type="entry name" value="EGF-type_Asp/Asn_hydroxyl_site"/>
</dbReference>
<dbReference type="InterPro" id="IPR018097">
    <property type="entry name" value="EGF_Ca-bd_CS"/>
</dbReference>
<dbReference type="InterPro" id="IPR009030">
    <property type="entry name" value="Growth_fac_rcpt_cys_sf"/>
</dbReference>
<dbReference type="InterPro" id="IPR008297">
    <property type="entry name" value="Notch"/>
</dbReference>
<dbReference type="InterPro" id="IPR035993">
    <property type="entry name" value="Notch-like_dom_sf"/>
</dbReference>
<dbReference type="InterPro" id="IPR051355">
    <property type="entry name" value="Notch/Slit_guidance"/>
</dbReference>
<dbReference type="InterPro" id="IPR049883">
    <property type="entry name" value="NOTCH1_EGF-like"/>
</dbReference>
<dbReference type="InterPro" id="IPR022336">
    <property type="entry name" value="Notch_2"/>
</dbReference>
<dbReference type="InterPro" id="IPR024600">
    <property type="entry name" value="Notch_C"/>
</dbReference>
<dbReference type="InterPro" id="IPR000800">
    <property type="entry name" value="Notch_dom"/>
</dbReference>
<dbReference type="InterPro" id="IPR010660">
    <property type="entry name" value="Notch_NOD_dom"/>
</dbReference>
<dbReference type="InterPro" id="IPR011656">
    <property type="entry name" value="Notch_NODP_dom"/>
</dbReference>
<dbReference type="PANTHER" id="PTHR45836:SF23">
    <property type="entry name" value="NEUROGENIC LOCUS NOTCH HOMOLOG PROTEIN 1"/>
    <property type="match status" value="1"/>
</dbReference>
<dbReference type="PANTHER" id="PTHR45836">
    <property type="entry name" value="SLIT HOMOLOG"/>
    <property type="match status" value="1"/>
</dbReference>
<dbReference type="Pfam" id="PF00023">
    <property type="entry name" value="Ank"/>
    <property type="match status" value="2"/>
</dbReference>
<dbReference type="Pfam" id="PF12796">
    <property type="entry name" value="Ank_2"/>
    <property type="match status" value="1"/>
</dbReference>
<dbReference type="Pfam" id="PF00008">
    <property type="entry name" value="EGF"/>
    <property type="match status" value="20"/>
</dbReference>
<dbReference type="Pfam" id="PF07645">
    <property type="entry name" value="EGF_CA"/>
    <property type="match status" value="4"/>
</dbReference>
<dbReference type="Pfam" id="PF12661">
    <property type="entry name" value="hEGF"/>
    <property type="match status" value="7"/>
</dbReference>
<dbReference type="Pfam" id="PF06816">
    <property type="entry name" value="NOD"/>
    <property type="match status" value="1"/>
</dbReference>
<dbReference type="Pfam" id="PF07684">
    <property type="entry name" value="NODP"/>
    <property type="match status" value="1"/>
</dbReference>
<dbReference type="Pfam" id="PF00066">
    <property type="entry name" value="Notch"/>
    <property type="match status" value="3"/>
</dbReference>
<dbReference type="PIRSF" id="PIRSF002279">
    <property type="entry name" value="Notch"/>
    <property type="match status" value="1"/>
</dbReference>
<dbReference type="PRINTS" id="PR00010">
    <property type="entry name" value="EGFBLOOD"/>
</dbReference>
<dbReference type="PRINTS" id="PR01452">
    <property type="entry name" value="LNOTCHREPEAT"/>
</dbReference>
<dbReference type="PRINTS" id="PR01983">
    <property type="entry name" value="NOTCH"/>
</dbReference>
<dbReference type="PRINTS" id="PR01985">
    <property type="entry name" value="NOTCH2"/>
</dbReference>
<dbReference type="SMART" id="SM00248">
    <property type="entry name" value="ANK"/>
    <property type="match status" value="6"/>
</dbReference>
<dbReference type="SMART" id="SM01334">
    <property type="entry name" value="DUF3454"/>
    <property type="match status" value="1"/>
</dbReference>
<dbReference type="SMART" id="SM00181">
    <property type="entry name" value="EGF"/>
    <property type="match status" value="36"/>
</dbReference>
<dbReference type="SMART" id="SM00179">
    <property type="entry name" value="EGF_CA"/>
    <property type="match status" value="34"/>
</dbReference>
<dbReference type="SMART" id="SM00004">
    <property type="entry name" value="NL"/>
    <property type="match status" value="3"/>
</dbReference>
<dbReference type="SMART" id="SM01338">
    <property type="entry name" value="NOD"/>
    <property type="match status" value="1"/>
</dbReference>
<dbReference type="SMART" id="SM01339">
    <property type="entry name" value="NODP"/>
    <property type="match status" value="1"/>
</dbReference>
<dbReference type="SUPFAM" id="SSF48403">
    <property type="entry name" value="Ankyrin repeat"/>
    <property type="match status" value="1"/>
</dbReference>
<dbReference type="SUPFAM" id="SSF57196">
    <property type="entry name" value="EGF/Laminin"/>
    <property type="match status" value="14"/>
</dbReference>
<dbReference type="SUPFAM" id="SSF57184">
    <property type="entry name" value="Growth factor receptor domain"/>
    <property type="match status" value="6"/>
</dbReference>
<dbReference type="SUPFAM" id="SSF90193">
    <property type="entry name" value="Notch domain"/>
    <property type="match status" value="2"/>
</dbReference>
<dbReference type="PROSITE" id="PS50297">
    <property type="entry name" value="ANK_REP_REGION"/>
    <property type="match status" value="1"/>
</dbReference>
<dbReference type="PROSITE" id="PS50088">
    <property type="entry name" value="ANK_REPEAT"/>
    <property type="match status" value="4"/>
</dbReference>
<dbReference type="PROSITE" id="PS00010">
    <property type="entry name" value="ASX_HYDROXYL"/>
    <property type="match status" value="22"/>
</dbReference>
<dbReference type="PROSITE" id="PS00022">
    <property type="entry name" value="EGF_1"/>
    <property type="match status" value="34"/>
</dbReference>
<dbReference type="PROSITE" id="PS01186">
    <property type="entry name" value="EGF_2"/>
    <property type="match status" value="29"/>
</dbReference>
<dbReference type="PROSITE" id="PS50026">
    <property type="entry name" value="EGF_3"/>
    <property type="match status" value="35"/>
</dbReference>
<dbReference type="PROSITE" id="PS01187">
    <property type="entry name" value="EGF_CA"/>
    <property type="match status" value="22"/>
</dbReference>
<dbReference type="PROSITE" id="PS50258">
    <property type="entry name" value="LNR"/>
    <property type="match status" value="3"/>
</dbReference>
<proteinExistence type="evidence at protein level"/>
<protein>
    <recommendedName>
        <fullName evidence="28">Neurogenic locus notch homolog protein 2</fullName>
        <shortName>Notch 2</shortName>
        <shortName>hN2</shortName>
    </recommendedName>
    <component>
        <recommendedName>
            <fullName>Notch 2 extracellular truncation</fullName>
            <shortName evidence="27">N2ECD</shortName>
        </recommendedName>
    </component>
    <component>
        <recommendedName>
            <fullName>Notch 2 intracellular domain</fullName>
            <shortName evidence="27">N2ICD</shortName>
        </recommendedName>
    </component>
</protein>
<accession>Q04721</accession>
<accession>Q5T3X7</accession>
<accession>Q99734</accession>
<accession>Q9H240</accession>
<reference key="1">
    <citation type="submission" date="2000-11" db="EMBL/GenBank/DDBJ databases">
        <title>Complete human notch 2 (hN2) cDNA sequence.</title>
        <authorList>
            <person name="Blaumueller C.M."/>
            <person name="Mann R.S."/>
        </authorList>
    </citation>
    <scope>NUCLEOTIDE SEQUENCE [MRNA]</scope>
    <source>
        <tissue>Brain</tissue>
    </source>
</reference>
<reference key="2">
    <citation type="submission" date="2000-10" db="EMBL/GenBank/DDBJ databases">
        <title>Human Notch2, a novel member of cell-fate determining NOTCH family.</title>
        <authorList>
            <person name="Correa R.G."/>
            <person name="Camargo A.A."/>
            <person name="Moreira E.S."/>
            <person name="Simpson A.J.G."/>
        </authorList>
    </citation>
    <scope>NUCLEOTIDE SEQUENCE [MRNA]</scope>
    <source>
        <tissue>Mammary tumor</tissue>
    </source>
</reference>
<reference key="3">
    <citation type="journal article" date="2006" name="Nature">
        <title>The DNA sequence and biological annotation of human chromosome 1.</title>
        <authorList>
            <person name="Gregory S.G."/>
            <person name="Barlow K.F."/>
            <person name="McLay K.E."/>
            <person name="Kaul R."/>
            <person name="Swarbreck D."/>
            <person name="Dunham A."/>
            <person name="Scott C.E."/>
            <person name="Howe K.L."/>
            <person name="Woodfine K."/>
            <person name="Spencer C.C.A."/>
            <person name="Jones M.C."/>
            <person name="Gillson C."/>
            <person name="Searle S."/>
            <person name="Zhou Y."/>
            <person name="Kokocinski F."/>
            <person name="McDonald L."/>
            <person name="Evans R."/>
            <person name="Phillips K."/>
            <person name="Atkinson A."/>
            <person name="Cooper R."/>
            <person name="Jones C."/>
            <person name="Hall R.E."/>
            <person name="Andrews T.D."/>
            <person name="Lloyd C."/>
            <person name="Ainscough R."/>
            <person name="Almeida J.P."/>
            <person name="Ambrose K.D."/>
            <person name="Anderson F."/>
            <person name="Andrew R.W."/>
            <person name="Ashwell R.I.S."/>
            <person name="Aubin K."/>
            <person name="Babbage A.K."/>
            <person name="Bagguley C.L."/>
            <person name="Bailey J."/>
            <person name="Beasley H."/>
            <person name="Bethel G."/>
            <person name="Bird C.P."/>
            <person name="Bray-Allen S."/>
            <person name="Brown J.Y."/>
            <person name="Brown A.J."/>
            <person name="Buckley D."/>
            <person name="Burton J."/>
            <person name="Bye J."/>
            <person name="Carder C."/>
            <person name="Chapman J.C."/>
            <person name="Clark S.Y."/>
            <person name="Clarke G."/>
            <person name="Clee C."/>
            <person name="Cobley V."/>
            <person name="Collier R.E."/>
            <person name="Corby N."/>
            <person name="Coville G.J."/>
            <person name="Davies J."/>
            <person name="Deadman R."/>
            <person name="Dunn M."/>
            <person name="Earthrowl M."/>
            <person name="Ellington A.G."/>
            <person name="Errington H."/>
            <person name="Frankish A."/>
            <person name="Frankland J."/>
            <person name="French L."/>
            <person name="Garner P."/>
            <person name="Garnett J."/>
            <person name="Gay L."/>
            <person name="Ghori M.R.J."/>
            <person name="Gibson R."/>
            <person name="Gilby L.M."/>
            <person name="Gillett W."/>
            <person name="Glithero R.J."/>
            <person name="Grafham D.V."/>
            <person name="Griffiths C."/>
            <person name="Griffiths-Jones S."/>
            <person name="Grocock R."/>
            <person name="Hammond S."/>
            <person name="Harrison E.S.I."/>
            <person name="Hart E."/>
            <person name="Haugen E."/>
            <person name="Heath P.D."/>
            <person name="Holmes S."/>
            <person name="Holt K."/>
            <person name="Howden P.J."/>
            <person name="Hunt A.R."/>
            <person name="Hunt S.E."/>
            <person name="Hunter G."/>
            <person name="Isherwood J."/>
            <person name="James R."/>
            <person name="Johnson C."/>
            <person name="Johnson D."/>
            <person name="Joy A."/>
            <person name="Kay M."/>
            <person name="Kershaw J.K."/>
            <person name="Kibukawa M."/>
            <person name="Kimberley A.M."/>
            <person name="King A."/>
            <person name="Knights A.J."/>
            <person name="Lad H."/>
            <person name="Laird G."/>
            <person name="Lawlor S."/>
            <person name="Leongamornlert D.A."/>
            <person name="Lloyd D.M."/>
            <person name="Loveland J."/>
            <person name="Lovell J."/>
            <person name="Lush M.J."/>
            <person name="Lyne R."/>
            <person name="Martin S."/>
            <person name="Mashreghi-Mohammadi M."/>
            <person name="Matthews L."/>
            <person name="Matthews N.S.W."/>
            <person name="McLaren S."/>
            <person name="Milne S."/>
            <person name="Mistry S."/>
            <person name="Moore M.J.F."/>
            <person name="Nickerson T."/>
            <person name="O'Dell C.N."/>
            <person name="Oliver K."/>
            <person name="Palmeiri A."/>
            <person name="Palmer S.A."/>
            <person name="Parker A."/>
            <person name="Patel D."/>
            <person name="Pearce A.V."/>
            <person name="Peck A.I."/>
            <person name="Pelan S."/>
            <person name="Phelps K."/>
            <person name="Phillimore B.J."/>
            <person name="Plumb R."/>
            <person name="Rajan J."/>
            <person name="Raymond C."/>
            <person name="Rouse G."/>
            <person name="Saenphimmachak C."/>
            <person name="Sehra H.K."/>
            <person name="Sheridan E."/>
            <person name="Shownkeen R."/>
            <person name="Sims S."/>
            <person name="Skuce C.D."/>
            <person name="Smith M."/>
            <person name="Steward C."/>
            <person name="Subramanian S."/>
            <person name="Sycamore N."/>
            <person name="Tracey A."/>
            <person name="Tromans A."/>
            <person name="Van Helmond Z."/>
            <person name="Wall M."/>
            <person name="Wallis J.M."/>
            <person name="White S."/>
            <person name="Whitehead S.L."/>
            <person name="Wilkinson J.E."/>
            <person name="Willey D.L."/>
            <person name="Williams H."/>
            <person name="Wilming L."/>
            <person name="Wray P.W."/>
            <person name="Wu Z."/>
            <person name="Coulson A."/>
            <person name="Vaudin M."/>
            <person name="Sulston J.E."/>
            <person name="Durbin R.M."/>
            <person name="Hubbard T."/>
            <person name="Wooster R."/>
            <person name="Dunham I."/>
            <person name="Carter N.P."/>
            <person name="McVean G."/>
            <person name="Ross M.T."/>
            <person name="Harrow J."/>
            <person name="Olson M.V."/>
            <person name="Beck S."/>
            <person name="Rogers J."/>
            <person name="Bentley D.R."/>
        </authorList>
    </citation>
    <scope>NUCLEOTIDE SEQUENCE [LARGE SCALE GENOMIC DNA]</scope>
</reference>
<reference key="4">
    <citation type="submission" date="1996-11" db="EMBL/GenBank/DDBJ databases">
        <title>Partial sequence of EGF-like repeat domain of human Notch2 mRNA.</title>
        <authorList>
            <person name="Lemasson I."/>
            <person name="Devaux C."/>
            <person name="Mesnard J.-M."/>
        </authorList>
    </citation>
    <scope>NUCLEOTIDE SEQUENCE [MRNA] OF 967-1229</scope>
    <source>
        <tissue>T-cell</tissue>
    </source>
</reference>
<reference key="5">
    <citation type="journal article" date="1992" name="Nat. Genet.">
        <title>Human homologs of a Drosophila enhancer of split gene product define a novel family of nuclear proteins.</title>
        <authorList>
            <person name="Stifani S."/>
            <person name="Blaumueller C.M."/>
            <person name="Redhead N.J."/>
            <person name="Hill R.E."/>
            <person name="Artavanis-Tsakonas S."/>
        </authorList>
    </citation>
    <scope>NUCLEOTIDE SEQUENCE [MRNA] OF 1810-2447</scope>
    <source>
        <tissue>Brain</tissue>
    </source>
</reference>
<reference key="6">
    <citation type="journal article" date="1997" name="Cell">
        <title>Intracellular cleavage of Notch leads to a heterodimeric receptor on the plasma membrane.</title>
        <authorList>
            <person name="Blaumueller C.M."/>
            <person name="Qi H."/>
            <person name="Zagouras P."/>
            <person name="Artavanis-Tsakonas S."/>
        </authorList>
    </citation>
    <scope>PROTEOLYTIC PROCESSING</scope>
    <scope>SUBCELLULAR LOCATION</scope>
</reference>
<reference key="7">
    <citation type="journal article" date="1999" name="Am. J. Pathol.">
        <title>Human ligands of the Notch receptor.</title>
        <authorList>
            <person name="Gray G.E."/>
            <person name="Mann R.S."/>
            <person name="Mitsiadis E."/>
            <person name="Henrique D."/>
            <person name="Carcangiu M.-L."/>
            <person name="Banks A."/>
            <person name="Leiman J."/>
            <person name="Ward D."/>
            <person name="Ish-Horowitz D."/>
            <person name="Artavanis-Tsakonas S."/>
        </authorList>
    </citation>
    <scope>IDENTIFICATION OF LIGANDS</scope>
</reference>
<reference key="8">
    <citation type="journal article" date="2000" name="Nat. Genet.">
        <title>MAML1, a human homologue of Drosophila mastermind, is a transcriptional co-activator for NOTCH receptors.</title>
        <authorList>
            <person name="Wu L."/>
            <person name="Aster J.C."/>
            <person name="Blacklow S.C."/>
            <person name="Lake R."/>
            <person name="Artavanis-Tsakonas S."/>
            <person name="Griffin J.D."/>
        </authorList>
    </citation>
    <scope>INTERACTION WITH MAML1</scope>
</reference>
<reference key="9">
    <citation type="journal article" date="2002" name="Mol. Cell. Biol.">
        <title>Identification of a family of mastermind-like transcriptional coactivators for mammalian notch receptors.</title>
        <authorList>
            <person name="Wu L."/>
            <person name="Sun T."/>
            <person name="Kobayashi K."/>
            <person name="Gao P."/>
            <person name="Griffin J.D."/>
        </authorList>
    </citation>
    <scope>INTERACTION WITH MAML2 AND MAML3</scope>
</reference>
<reference key="10">
    <citation type="journal article" date="2006" name="Cell">
        <title>Global, in vivo, and site-specific phosphorylation dynamics in signaling networks.</title>
        <authorList>
            <person name="Olsen J.V."/>
            <person name="Blagoev B."/>
            <person name="Gnad F."/>
            <person name="Macek B."/>
            <person name="Kumar C."/>
            <person name="Mortensen P."/>
            <person name="Mann M."/>
        </authorList>
    </citation>
    <scope>IDENTIFICATION BY MASS SPECTROMETRY [LARGE SCALE ANALYSIS]</scope>
    <source>
        <tissue>Cervix carcinoma</tissue>
    </source>
</reference>
<reference key="11">
    <citation type="journal article" date="2007" name="J. Biol. Chem.">
        <title>Asparaginyl hydroxylation of the Notch ankyrin repeat domain by factor inhibiting hypoxia-inducible factor.</title>
        <authorList>
            <person name="Coleman M.L."/>
            <person name="McDonough M.A."/>
            <person name="Hewitson K.S."/>
            <person name="Coles C."/>
            <person name="Mecinovic J."/>
            <person name="Edelmann M."/>
            <person name="Cook K.M."/>
            <person name="Cockman M.E."/>
            <person name="Lancaster D.E."/>
            <person name="Kessler B.M."/>
            <person name="Oldham N.J."/>
            <person name="Ratcliffe P.J."/>
            <person name="Schofield C.J."/>
        </authorList>
    </citation>
    <scope>INTERACTION WITH HIF1AN</scope>
</reference>
<reference key="12">
    <citation type="journal article" date="2008" name="Cell Cycle">
        <title>Midkine induces epithelial-mesenchymal transition through Notch2/Jak2-Stat3 signaling in human keratinocytes.</title>
        <authorList>
            <person name="Huang Y."/>
            <person name="Hoque M.O."/>
            <person name="Wu F."/>
            <person name="Trink B."/>
            <person name="Sidransky D."/>
            <person name="Ratovitski E.A."/>
        </authorList>
    </citation>
    <scope>INTERACTION WITH MDK</scope>
</reference>
<reference key="13">
    <citation type="journal article" date="2008" name="Proc. Natl. Acad. Sci. U.S.A.">
        <title>A quantitative atlas of mitotic phosphorylation.</title>
        <authorList>
            <person name="Dephoure N."/>
            <person name="Zhou C."/>
            <person name="Villen J."/>
            <person name="Beausoleil S.A."/>
            <person name="Bakalarski C.E."/>
            <person name="Elledge S.J."/>
            <person name="Gygi S.P."/>
        </authorList>
    </citation>
    <scope>PHOSPHORYLATION [LARGE SCALE ANALYSIS] AT THR-1716; THR-1802; SER-1804; THR-1808; SER-1845; SER-2070; SER-2081 AND THR-2097</scope>
    <scope>IDENTIFICATION BY MASS SPECTROMETRY [LARGE SCALE ANALYSIS]</scope>
    <source>
        <tissue>Cervix carcinoma</tissue>
    </source>
</reference>
<reference key="14">
    <citation type="journal article" date="2008" name="Proc. Natl. Acad. Sci. U.S.A.">
        <title>Interaction with factor inhibiting HIF-1 defines an additional mode of cross-coupling between the Notch and hypoxia signaling pathways.</title>
        <authorList>
            <person name="Zheng X."/>
            <person name="Linke S."/>
            <person name="Dias J.M."/>
            <person name="Zheng X."/>
            <person name="Gradin K."/>
            <person name="Wallis T.P."/>
            <person name="Hamilton B.R."/>
            <person name="Gustafsson M."/>
            <person name="Ruas J.L."/>
            <person name="Wilkins S."/>
            <person name="Bilton R.L."/>
            <person name="Brismar K."/>
            <person name="Whitelaw M.L."/>
            <person name="Pereira T."/>
            <person name="Gorman J.J."/>
            <person name="Ericson J."/>
            <person name="Peet D.J."/>
            <person name="Lendahl U."/>
            <person name="Poellinger L."/>
        </authorList>
    </citation>
    <scope>HYDROXYLATION BY HIF1AN</scope>
</reference>
<reference key="15">
    <citation type="journal article" date="2009" name="Sci. Signal.">
        <title>Quantitative phosphoproteomic analysis of T cell receptor signaling reveals system-wide modulation of protein-protein interactions.</title>
        <authorList>
            <person name="Mayya V."/>
            <person name="Lundgren D.H."/>
            <person name="Hwang S.-I."/>
            <person name="Rezaul K."/>
            <person name="Wu L."/>
            <person name="Eng J.K."/>
            <person name="Rodionov V."/>
            <person name="Han D.K."/>
        </authorList>
    </citation>
    <scope>PHOSPHORYLATION [LARGE SCALE ANALYSIS] AT SER-1778 AND SER-1845</scope>
    <scope>IDENTIFICATION BY MASS SPECTROMETRY [LARGE SCALE ANALYSIS]</scope>
    <source>
        <tissue>Leukemic T-cell</tissue>
    </source>
</reference>
<reference key="16">
    <citation type="journal article" date="2010" name="Sci. Signal.">
        <title>Quantitative phosphoproteomics reveals widespread full phosphorylation site occupancy during mitosis.</title>
        <authorList>
            <person name="Olsen J.V."/>
            <person name="Vermeulen M."/>
            <person name="Santamaria A."/>
            <person name="Kumar C."/>
            <person name="Miller M.L."/>
            <person name="Jensen L.J."/>
            <person name="Gnad F."/>
            <person name="Cox J."/>
            <person name="Jensen T.S."/>
            <person name="Nigg E.A."/>
            <person name="Brunak S."/>
            <person name="Mann M."/>
        </authorList>
    </citation>
    <scope>PHOSPHORYLATION [LARGE SCALE ANALYSIS] AT SER-1778</scope>
    <scope>IDENTIFICATION BY MASS SPECTROMETRY [LARGE SCALE ANALYSIS]</scope>
    <source>
        <tissue>Cervix carcinoma</tissue>
    </source>
</reference>
<reference key="17">
    <citation type="journal article" date="2011" name="Hum. Mutat.">
        <title>Mutations in NOTCH2 in families with Hajdu-Cheney syndrome.</title>
        <authorList>
            <consortium name="FORGE Canada Consortium"/>
            <person name="Majewski J."/>
            <person name="Schwartzentruber J.A."/>
            <person name="Caqueret A."/>
            <person name="Patry L."/>
            <person name="Marcadier J."/>
            <person name="Fryns J.P."/>
            <person name="Boycott K.M."/>
            <person name="Ste-Marie L.G."/>
            <person name="McKiernan F.E."/>
            <person name="Marik I."/>
            <person name="Van Esch H."/>
            <person name="Michaud J.L."/>
            <person name="Samuels M.E."/>
        </authorList>
    </citation>
    <scope>INVOLVEMENT IN HJCYS</scope>
    <scope>VARIANTS HJCYS 2208-GLN--ALA-2471 DEL; 2223-GLN--ALA-2471 DEL AND 2360-GLN--ALA-2471 DEL</scope>
</reference>
<reference key="18">
    <citation type="journal article" date="2011" name="Nat. Genet.">
        <title>Truncating mutations in the last exon of NOTCH2 cause a rare skeletal disorder with osteoporosis.</title>
        <authorList>
            <person name="Isidor B."/>
            <person name="Lindenbaum P."/>
            <person name="Pichon O."/>
            <person name="Bezieau S."/>
            <person name="Dina C."/>
            <person name="Jacquemont S."/>
            <person name="Martin-Coignard D."/>
            <person name="Thauvin-Robinet C."/>
            <person name="Le Merrer M."/>
            <person name="Mandel J.L."/>
            <person name="David A."/>
            <person name="Faivre L."/>
            <person name="Cormier-Daire V."/>
            <person name="Redon R."/>
            <person name="Le Caignec C."/>
        </authorList>
    </citation>
    <scope>FUNCTION</scope>
    <scope>INVOLVEMENT IN HJCYS</scope>
    <scope>VARIANTS HJCYS 2285-GLN--ALA-2471 DEL; 2317-GLN--ALA-2471 DEL AND 2373-TYR--ALA-2471 DEL</scope>
</reference>
<reference key="19">
    <citation type="journal article" date="2011" name="Nat. Genet.">
        <title>Mutations in NOTCH2 cause Hajdu-Cheney syndrome, a disorder of severe and progressive bone loss.</title>
        <authorList>
            <person name="Simpson M.A."/>
            <person name="Irving M.D."/>
            <person name="Asilmaz E."/>
            <person name="Gray M.J."/>
            <person name="Dafou D."/>
            <person name="Elmslie F.V."/>
            <person name="Mansour S."/>
            <person name="Holder S.E."/>
            <person name="Brain C.E."/>
            <person name="Burton B.K."/>
            <person name="Kim K.H."/>
            <person name="Pauli R.M."/>
            <person name="Aftimos S."/>
            <person name="Stewart H."/>
            <person name="Kim C.A."/>
            <person name="Holder-Espinasse M."/>
            <person name="Robertson S.P."/>
            <person name="Drake W.M."/>
            <person name="Trembath R.C."/>
        </authorList>
    </citation>
    <scope>FUNCTION</scope>
    <scope>INVOLVEMENT IN HJCYS</scope>
    <scope>TISSUE SPECIFICITY</scope>
    <scope>VARIANTS HJCYS 2140-GLN--ALA-2471 DEL; 2208-GLN--ALA-2471 DEL; 2325-GLN--ALA-2471 DEL AND 2400-ARG--ALA-2471 DEL</scope>
</reference>
<reference key="20">
    <citation type="journal article" date="2013" name="J. Proteome Res.">
        <title>Toward a comprehensive characterization of a human cancer cell phosphoproteome.</title>
        <authorList>
            <person name="Zhou H."/>
            <person name="Di Palma S."/>
            <person name="Preisinger C."/>
            <person name="Peng M."/>
            <person name="Polat A.N."/>
            <person name="Heck A.J."/>
            <person name="Mohammed S."/>
        </authorList>
    </citation>
    <scope>PHOSPHORYLATION [LARGE SCALE ANALYSIS] AT SER-1778</scope>
    <scope>IDENTIFICATION BY MASS SPECTROMETRY [LARGE SCALE ANALYSIS]</scope>
    <source>
        <tissue>Cervix carcinoma</tissue>
    </source>
</reference>
<reference key="21">
    <citation type="journal article" date="2015" name="Nat. Commun.">
        <title>C8orf4 negatively regulates self-renewal of liver cancer stem cells via suppression of NOTCH2 signalling.</title>
        <authorList>
            <person name="Zhu P."/>
            <person name="Wang Y."/>
            <person name="Du Y."/>
            <person name="He L."/>
            <person name="Huang G."/>
            <person name="Zhang G."/>
            <person name="Yan X."/>
            <person name="Fan Z."/>
        </authorList>
    </citation>
    <scope>FUNCTION</scope>
    <scope>INTERACTION WITH TCIM</scope>
    <scope>SUBCELLULAR LOCATION</scope>
</reference>
<reference key="22">
    <citation type="journal article" date="2017" name="Mol. Cell">
        <title>NOTCH2 Hajdu-Cheney mutations escape SCFFBW7-dependent proteolysis to promote osteoporosis.</title>
        <authorList>
            <person name="Fukushima H."/>
            <person name="Shimizu K."/>
            <person name="Watahiki A."/>
            <person name="Hoshikawa S."/>
            <person name="Kosho T."/>
            <person name="Oba D."/>
            <person name="Sakano S."/>
            <person name="Arakaki M."/>
            <person name="Yamada A."/>
            <person name="Nagashima K."/>
            <person name="Okabe K."/>
            <person name="Fukumoto S."/>
            <person name="Jimi E."/>
            <person name="Bigas A."/>
            <person name="Nakayama K.I."/>
            <person name="Nakayama K."/>
            <person name="Aoki Y."/>
            <person name="Wei W."/>
            <person name="Inuzuka H."/>
        </authorList>
    </citation>
    <scope>FUNCTION</scope>
    <scope>PHOSPHORYLATION BY GSK3</scope>
    <scope>UBIQUITINATION</scope>
    <scope>INTERACTION WITH CUL1; SKP1; RBX1 AND FBW7</scope>
    <scope>MUTAGENESIS OF THR-2416</scope>
    <scope>CHARACTERIZATION OF VARIANT HJCYS 2317-GLN--ALA-2471 DEL</scope>
</reference>
<reference key="23">
    <citation type="journal article" date="2018" name="Cell">
        <title>Human-specific NOTCH2NL genes affect Notch signaling and cortical neurogenesis.</title>
        <authorList>
            <person name="Fiddes I.T."/>
            <person name="Lodewijk G.A."/>
            <person name="Mooring M."/>
            <person name="Bosworth C.M."/>
            <person name="Ewing A.D."/>
            <person name="Mantalas G.L."/>
            <person name="Novak A.M."/>
            <person name="van den Bout A."/>
            <person name="Bishara A."/>
            <person name="Rosenkrantz J.L."/>
            <person name="Lorig-Roach R."/>
            <person name="Field A.R."/>
            <person name="Haeussler M."/>
            <person name="Russo L."/>
            <person name="Bhaduri A."/>
            <person name="Nowakowski T.J."/>
            <person name="Pollen A.A."/>
            <person name="Dougherty M.L."/>
            <person name="Nuttle X."/>
            <person name="Addor M.C."/>
            <person name="Zwolinski S."/>
            <person name="Katzman S."/>
            <person name="Kriegstein A."/>
            <person name="Eichler E.E."/>
            <person name="Salama S.R."/>
            <person name="Jacobs F.M.J."/>
            <person name="Haussler D."/>
        </authorList>
    </citation>
    <scope>INTERACTION WITH NOTCH2NLA; NOTCH2NLB AND NOTCH2NLC</scope>
</reference>
<reference key="24">
    <citation type="journal article" date="2018" name="J. Mol. Cell Biol.">
        <title>MINAR1 is a Notch2-binding protein that inhibits angiogenesis and breast cancer growth.</title>
        <authorList>
            <person name="Ho R.X."/>
            <person name="Meyer R.D."/>
            <person name="Chandler K.B."/>
            <person name="Ersoy E."/>
            <person name="Park M."/>
            <person name="Bondzie P.A."/>
            <person name="Rahimi N."/>
            <person name="Xu H."/>
            <person name="Costello C.E."/>
            <person name="Rahimi N."/>
        </authorList>
    </citation>
    <scope>SUBCELLULAR LOCATION</scope>
    <scope>INTERACTION WITH MINAR1</scope>
</reference>
<reference key="25">
    <citation type="journal article" date="2020" name="Brain Commun.">
        <title>Loss of MINAR2 impairs motor function and causes Parkinson's disease-like symptoms in mice.</title>
        <authorList>
            <person name="Ho R.X."/>
            <person name="Amraei R."/>
            <person name="De La Cena K.O.C."/>
            <person name="Sutherland E.G."/>
            <person name="Mortazavi F."/>
            <person name="Stein T."/>
            <person name="Chitalia V."/>
            <person name="Rahimi N."/>
        </authorList>
    </citation>
    <scope>INTERACTION WITH MINAR2</scope>
</reference>
<reference key="26">
    <citation type="journal article" date="2007" name="Nat. Struct. Mol. Biol.">
        <title>Structural basis for autoinhibition of Notch.</title>
        <authorList>
            <person name="Gordon W.R."/>
            <person name="Vardar-Ulu D."/>
            <person name="Histen G."/>
            <person name="Sanchez-Irizarry C."/>
            <person name="Aster J.C."/>
            <person name="Blacklow S.C."/>
        </authorList>
    </citation>
    <scope>X-RAY CRYSTALLOGRAPHY (2.0 ANGSTROMS) OF 1426-1677</scope>
    <scope>DISULFIDE BONDS</scope>
</reference>
<reference key="27">
    <citation type="journal article" date="2006" name="Am. J. Hum. Genet.">
        <title>NOTCH2 mutations cause Alagille syndrome, a heterogeneous disorder of the notch signaling pathway.</title>
        <authorList>
            <person name="McDaniell R."/>
            <person name="Warthen D.M."/>
            <person name="Sanchez-Lara P.A."/>
            <person name="Pai A."/>
            <person name="Krantz I.D."/>
            <person name="Piccoli D.A."/>
            <person name="Spinner N.B."/>
        </authorList>
    </citation>
    <scope>VARIANT ALGS2 TYR-444</scope>
</reference>
<reference key="28">
    <citation type="journal article" date="2011" name="Hum. Mutat.">
        <title>Serpentine fibula-polycystic kidney syndrome caused by truncating mutations in NOTCH2.</title>
        <authorList>
            <person name="Isidor B."/>
            <person name="Le Merrer M."/>
            <person name="Exner G.U."/>
            <person name="Pichon O."/>
            <person name="Thierry G."/>
            <person name="Guiochon-Mantel A."/>
            <person name="David A."/>
            <person name="Cormier-Daire V."/>
            <person name="Le Caignec C."/>
        </authorList>
    </citation>
    <scope>VARIANT HJCYS 2400-ARG--ALA-2471 DEL</scope>
</reference>
<reference key="29">
    <citation type="journal article" date="2012" name="Eur. J. Hum. Genet.">
        <title>Serpentine fibula polycystic kidney syndrome is part of the phenotypic spectrum of Hajdu-Cheney syndrome.</title>
        <authorList>
            <person name="Gray M.J."/>
            <person name="Kim C.A."/>
            <person name="Bertola D.R."/>
            <person name="Arantes P.R."/>
            <person name="Stewart H."/>
            <person name="Simpson M.A."/>
            <person name="Irving M.D."/>
            <person name="Robertson S.P."/>
        </authorList>
    </citation>
    <scope>VARIANTS HJCYS 2299-GLU--ALA-2471 DEL AND 2389-GLN--ALA-2471 DEL</scope>
</reference>
<reference key="30">
    <citation type="journal article" date="2013" name="Osteoporos. Int.">
        <title>Mutations in NOTCH2 in patients with Hajdu-Cheney syndrome.</title>
        <authorList>
            <person name="Zhao W."/>
            <person name="Petit E."/>
            <person name="Gafni R.I."/>
            <person name="Collins M.T."/>
            <person name="Robey P.G."/>
            <person name="Seton M."/>
            <person name="Miller K.K."/>
            <person name="Mannstadt M."/>
        </authorList>
    </citation>
    <scope>VARIANTS HJCYS 2196-GLN--ALA-2471 DEL AND 2400-ARG--ALA-2471 DEL</scope>
</reference>
<feature type="signal peptide" evidence="5">
    <location>
        <begin position="1"/>
        <end position="25"/>
    </location>
</feature>
<feature type="chain" id="PRO_0000007683" description="Neurogenic locus notch homolog protein 2">
    <location>
        <begin position="26"/>
        <end position="2471"/>
    </location>
</feature>
<feature type="chain" id="PRO_0000007684" description="Notch 2 extracellular truncation" evidence="3">
    <location>
        <begin position="1666"/>
        <end position="2471"/>
    </location>
</feature>
<feature type="chain" id="PRO_0000007685" description="Notch 2 intracellular domain" evidence="2">
    <location>
        <begin position="1697"/>
        <end position="2471"/>
    </location>
</feature>
<feature type="topological domain" description="Extracellular" evidence="5">
    <location>
        <begin position="26"/>
        <end position="1677"/>
    </location>
</feature>
<feature type="transmembrane region" description="Helical" evidence="5">
    <location>
        <begin position="1678"/>
        <end position="1698"/>
    </location>
</feature>
<feature type="topological domain" description="Cytoplasmic" evidence="5">
    <location>
        <begin position="1699"/>
        <end position="2471"/>
    </location>
</feature>
<feature type="domain" description="EGF-like 1" evidence="6">
    <location>
        <begin position="26"/>
        <end position="63"/>
    </location>
</feature>
<feature type="domain" description="EGF-like 2" evidence="6">
    <location>
        <begin position="64"/>
        <end position="102"/>
    </location>
</feature>
<feature type="domain" description="EGF-like 3" evidence="6">
    <location>
        <begin position="105"/>
        <end position="143"/>
    </location>
</feature>
<feature type="domain" description="EGF-like 4" evidence="6">
    <location>
        <begin position="144"/>
        <end position="180"/>
    </location>
</feature>
<feature type="domain" description="EGF-like 5; calcium-binding" evidence="6">
    <location>
        <begin position="182"/>
        <end position="219"/>
    </location>
</feature>
<feature type="domain" description="EGF-like 6" evidence="6">
    <location>
        <begin position="221"/>
        <end position="258"/>
    </location>
</feature>
<feature type="domain" description="EGF-like 7; calcium-binding" evidence="6">
    <location>
        <begin position="260"/>
        <end position="296"/>
    </location>
</feature>
<feature type="domain" description="EGF-like 8; calcium-binding" evidence="6">
    <location>
        <begin position="298"/>
        <end position="336"/>
    </location>
</feature>
<feature type="domain" description="EGF-like 9; calcium-binding" evidence="6">
    <location>
        <begin position="338"/>
        <end position="374"/>
    </location>
</feature>
<feature type="domain" description="EGF-like 10" evidence="6">
    <location>
        <begin position="375"/>
        <end position="413"/>
    </location>
</feature>
<feature type="domain" description="EGF-like 11; calcium-binding" evidence="6">
    <location>
        <begin position="415"/>
        <end position="454"/>
    </location>
</feature>
<feature type="domain" description="EGF-like 12; calcium-binding" evidence="6">
    <location>
        <begin position="456"/>
        <end position="492"/>
    </location>
</feature>
<feature type="domain" description="EGF-like 13; calcium-binding" evidence="6">
    <location>
        <begin position="494"/>
        <end position="530"/>
    </location>
</feature>
<feature type="domain" description="EGF-like 14; calcium-binding" evidence="6">
    <location>
        <begin position="532"/>
        <end position="568"/>
    </location>
</feature>
<feature type="domain" description="EGF-like 15; calcium-binding" evidence="6">
    <location>
        <begin position="570"/>
        <end position="605"/>
    </location>
</feature>
<feature type="domain" description="EGF-like 16; calcium-binding" evidence="6">
    <location>
        <begin position="607"/>
        <end position="643"/>
    </location>
</feature>
<feature type="domain" description="EGF-like 17; calcium-binding" evidence="6">
    <location>
        <begin position="645"/>
        <end position="680"/>
    </location>
</feature>
<feature type="domain" description="EGF-like 18; calcium-binding" evidence="6">
    <location>
        <begin position="682"/>
        <end position="718"/>
    </location>
</feature>
<feature type="domain" description="EGF-like 19" evidence="6">
    <location>
        <begin position="720"/>
        <end position="755"/>
    </location>
</feature>
<feature type="domain" description="EGF-like 20; calcium-binding" evidence="6">
    <location>
        <begin position="757"/>
        <end position="793"/>
    </location>
</feature>
<feature type="domain" description="EGF-like 21; calcium-binding" evidence="6">
    <location>
        <begin position="795"/>
        <end position="831"/>
    </location>
</feature>
<feature type="domain" description="EGF-like 22" evidence="6">
    <location>
        <begin position="833"/>
        <end position="871"/>
    </location>
</feature>
<feature type="domain" description="EGF-like 23; calcium-binding" evidence="6">
    <location>
        <begin position="873"/>
        <end position="909"/>
    </location>
</feature>
<feature type="domain" description="EGF-like 24; calcium-binding" evidence="6">
    <location>
        <begin position="911"/>
        <end position="947"/>
    </location>
</feature>
<feature type="domain" description="EGF-like 25; calcium-binding" evidence="6">
    <location>
        <begin position="949"/>
        <end position="985"/>
    </location>
</feature>
<feature type="domain" description="EGF-like 26; calcium-binding" evidence="6">
    <location>
        <begin position="987"/>
        <end position="1023"/>
    </location>
</feature>
<feature type="domain" description="EGF-like 27; calcium-binding" evidence="6">
    <location>
        <begin position="1025"/>
        <end position="1061"/>
    </location>
</feature>
<feature type="domain" description="EGF-like 28" evidence="6">
    <location>
        <begin position="1063"/>
        <end position="1099"/>
    </location>
</feature>
<feature type="domain" description="EGF-like 29" evidence="28">
    <location>
        <begin position="1101"/>
        <end position="1147"/>
    </location>
</feature>
<feature type="domain" description="EGF-like 30; calcium-binding" evidence="6">
    <location>
        <begin position="1149"/>
        <end position="1185"/>
    </location>
</feature>
<feature type="domain" description="EGF-like 31; calcium-binding" evidence="6">
    <location>
        <begin position="1187"/>
        <end position="1223"/>
    </location>
</feature>
<feature type="domain" description="EGF-like 32; calcium-binding" evidence="6">
    <location>
        <begin position="1225"/>
        <end position="1262"/>
    </location>
</feature>
<feature type="domain" description="EGF-like 33" evidence="6">
    <location>
        <begin position="1264"/>
        <end position="1302"/>
    </location>
</feature>
<feature type="domain" description="EGF-like 34" evidence="6">
    <location>
        <begin position="1304"/>
        <end position="1343"/>
    </location>
</feature>
<feature type="domain" description="EGF-like 35" evidence="6">
    <location>
        <begin position="1374"/>
        <end position="1412"/>
    </location>
</feature>
<feature type="repeat" description="LNR 1">
    <location>
        <begin position="1425"/>
        <end position="1465"/>
    </location>
</feature>
<feature type="repeat" description="LNR 2">
    <location>
        <begin position="1466"/>
        <end position="1502"/>
    </location>
</feature>
<feature type="repeat" description="LNR 3">
    <location>
        <begin position="1503"/>
        <end position="1544"/>
    </location>
</feature>
<feature type="repeat" description="ANK 1">
    <location>
        <begin position="1827"/>
        <end position="1871"/>
    </location>
</feature>
<feature type="repeat" description="ANK 2">
    <location>
        <begin position="1876"/>
        <end position="1905"/>
    </location>
</feature>
<feature type="repeat" description="ANK 3">
    <location>
        <begin position="1909"/>
        <end position="1939"/>
    </location>
</feature>
<feature type="repeat" description="ANK 4">
    <location>
        <begin position="1943"/>
        <end position="1972"/>
    </location>
</feature>
<feature type="repeat" description="ANK 5">
    <location>
        <begin position="1976"/>
        <end position="2005"/>
    </location>
</feature>
<feature type="repeat" description="ANK 6">
    <location>
        <begin position="2009"/>
        <end position="2038"/>
    </location>
</feature>
<feature type="region of interest" description="Negative regulatory region (NRR)">
    <location>
        <begin position="1425"/>
        <end position="1677"/>
    </location>
</feature>
<feature type="region of interest" description="Disordered" evidence="7">
    <location>
        <begin position="1754"/>
        <end position="1788"/>
    </location>
</feature>
<feature type="region of interest" description="Disordered" evidence="7">
    <location>
        <begin position="2091"/>
        <end position="2168"/>
    </location>
</feature>
<feature type="region of interest" description="Disordered" evidence="7">
    <location>
        <begin position="2380"/>
        <end position="2471"/>
    </location>
</feature>
<feature type="compositionally biased region" description="Acidic residues" evidence="7">
    <location>
        <begin position="1774"/>
        <end position="1783"/>
    </location>
</feature>
<feature type="compositionally biased region" description="Basic residues" evidence="7">
    <location>
        <begin position="2098"/>
        <end position="2107"/>
    </location>
</feature>
<feature type="compositionally biased region" description="Polar residues" evidence="7">
    <location>
        <begin position="2108"/>
        <end position="2117"/>
    </location>
</feature>
<feature type="compositionally biased region" description="Polar residues" evidence="7">
    <location>
        <begin position="2137"/>
        <end position="2150"/>
    </location>
</feature>
<feature type="compositionally biased region" description="Polar residues" evidence="7">
    <location>
        <begin position="2159"/>
        <end position="2168"/>
    </location>
</feature>
<feature type="compositionally biased region" description="Polar residues" evidence="7">
    <location>
        <begin position="2388"/>
        <end position="2406"/>
    </location>
</feature>
<feature type="compositionally biased region" description="Low complexity" evidence="7">
    <location>
        <begin position="2417"/>
        <end position="2445"/>
    </location>
</feature>
<feature type="site" description="Essential for O-xylosylation" evidence="2">
    <location>
        <position position="614"/>
    </location>
</feature>
<feature type="modified residue" description="Phosphothreonine" evidence="30">
    <location>
        <position position="1716"/>
    </location>
</feature>
<feature type="modified residue" description="Phosphoserine" evidence="31 32 33">
    <location>
        <position position="1778"/>
    </location>
</feature>
<feature type="modified residue" description="Phosphothreonine" evidence="30">
    <location>
        <position position="1802"/>
    </location>
</feature>
<feature type="modified residue" description="Phosphoserine" evidence="30">
    <location>
        <position position="1804"/>
    </location>
</feature>
<feature type="modified residue" description="Phosphothreonine" evidence="30">
    <location>
        <position position="1808"/>
    </location>
</feature>
<feature type="modified residue" description="Phosphoserine" evidence="2">
    <location>
        <position position="1842"/>
    </location>
</feature>
<feature type="modified residue" description="Phosphoserine" evidence="30 31">
    <location>
        <position position="1845"/>
    </location>
</feature>
<feature type="modified residue" description="Phosphoserine" evidence="30">
    <location>
        <position position="2070"/>
    </location>
</feature>
<feature type="modified residue" description="Phosphoserine" evidence="4">
    <location>
        <position position="2078"/>
    </location>
</feature>
<feature type="modified residue" description="Phosphoserine" evidence="30">
    <location>
        <position position="2081"/>
    </location>
</feature>
<feature type="modified residue" description="Phosphothreonine" evidence="30">
    <location>
        <position position="2097"/>
    </location>
</feature>
<feature type="glycosylation site" description="N-linked (GlcNAc...) asparagine" evidence="5">
    <location>
        <position position="46"/>
    </location>
</feature>
<feature type="glycosylation site" description="N-linked (GlcNAc...) asparagine" evidence="5">
    <location>
        <position position="155"/>
    </location>
</feature>
<feature type="glycosylation site" description="O-linked (Glc...) serine; alternate" evidence="2">
    <location>
        <position position="613"/>
    </location>
</feature>
<feature type="glycosylation site" description="O-linked (Xyl...) serine; alternate" evidence="2">
    <location>
        <position position="613"/>
    </location>
</feature>
<feature type="glycosylation site" description="N-linked (GlcNAc...) asparagine" evidence="5">
    <location>
        <position position="733"/>
    </location>
</feature>
<feature type="glycosylation site" description="N-linked (GlcNAc...) asparagine" evidence="5">
    <location>
        <position position="1102"/>
    </location>
</feature>
<feature type="glycosylation site" description="N-linked (GlcNAc...) asparagine" evidence="5">
    <location>
        <position position="1465"/>
    </location>
</feature>
<feature type="disulfide bond" evidence="1">
    <location>
        <begin position="28"/>
        <end position="41"/>
    </location>
</feature>
<feature type="disulfide bond" evidence="1">
    <location>
        <begin position="35"/>
        <end position="51"/>
    </location>
</feature>
<feature type="disulfide bond" evidence="1">
    <location>
        <begin position="53"/>
        <end position="62"/>
    </location>
</feature>
<feature type="disulfide bond" evidence="1">
    <location>
        <begin position="68"/>
        <end position="79"/>
    </location>
</feature>
<feature type="disulfide bond" evidence="1">
    <location>
        <begin position="73"/>
        <end position="90"/>
    </location>
</feature>
<feature type="disulfide bond" evidence="1">
    <location>
        <begin position="92"/>
        <end position="101"/>
    </location>
</feature>
<feature type="disulfide bond" evidence="1">
    <location>
        <begin position="109"/>
        <end position="121"/>
    </location>
</feature>
<feature type="disulfide bond" evidence="1">
    <location>
        <begin position="115"/>
        <end position="131"/>
    </location>
</feature>
<feature type="disulfide bond" evidence="1">
    <location>
        <begin position="133"/>
        <end position="142"/>
    </location>
</feature>
<feature type="disulfide bond" evidence="1">
    <location>
        <begin position="148"/>
        <end position="159"/>
    </location>
</feature>
<feature type="disulfide bond" evidence="1">
    <location>
        <begin position="153"/>
        <end position="168"/>
    </location>
</feature>
<feature type="disulfide bond" evidence="1">
    <location>
        <begin position="170"/>
        <end position="179"/>
    </location>
</feature>
<feature type="disulfide bond" evidence="1">
    <location>
        <begin position="186"/>
        <end position="198"/>
    </location>
</feature>
<feature type="disulfide bond" evidence="1">
    <location>
        <begin position="192"/>
        <end position="207"/>
    </location>
</feature>
<feature type="disulfide bond" evidence="1">
    <location>
        <begin position="209"/>
        <end position="218"/>
    </location>
</feature>
<feature type="disulfide bond" evidence="1">
    <location>
        <begin position="225"/>
        <end position="236"/>
    </location>
</feature>
<feature type="disulfide bond" evidence="1">
    <location>
        <begin position="230"/>
        <end position="246"/>
    </location>
</feature>
<feature type="disulfide bond" evidence="1">
    <location>
        <begin position="248"/>
        <end position="257"/>
    </location>
</feature>
<feature type="disulfide bond" evidence="1">
    <location>
        <begin position="264"/>
        <end position="275"/>
    </location>
</feature>
<feature type="disulfide bond" evidence="1">
    <location>
        <begin position="269"/>
        <end position="284"/>
    </location>
</feature>
<feature type="disulfide bond" evidence="1">
    <location>
        <begin position="286"/>
        <end position="295"/>
    </location>
</feature>
<feature type="disulfide bond" evidence="1">
    <location>
        <begin position="302"/>
        <end position="315"/>
    </location>
</feature>
<feature type="disulfide bond" evidence="1">
    <location>
        <begin position="309"/>
        <end position="324"/>
    </location>
</feature>
<feature type="disulfide bond" evidence="1">
    <location>
        <begin position="326"/>
        <end position="335"/>
    </location>
</feature>
<feature type="disulfide bond" evidence="1">
    <location>
        <begin position="342"/>
        <end position="353"/>
    </location>
</feature>
<feature type="disulfide bond" evidence="1">
    <location>
        <begin position="347"/>
        <end position="362"/>
    </location>
</feature>
<feature type="disulfide bond" evidence="1">
    <location>
        <begin position="364"/>
        <end position="373"/>
    </location>
</feature>
<feature type="disulfide bond" evidence="1">
    <location>
        <begin position="379"/>
        <end position="390"/>
    </location>
</feature>
<feature type="disulfide bond" evidence="1">
    <location>
        <begin position="384"/>
        <end position="401"/>
    </location>
</feature>
<feature type="disulfide bond" evidence="1">
    <location>
        <begin position="403"/>
        <end position="412"/>
    </location>
</feature>
<feature type="disulfide bond" evidence="1">
    <location>
        <begin position="419"/>
        <end position="433"/>
    </location>
</feature>
<feature type="disulfide bond" evidence="1">
    <location>
        <begin position="427"/>
        <end position="442"/>
    </location>
</feature>
<feature type="disulfide bond" evidence="1">
    <location>
        <begin position="444"/>
        <end position="453"/>
    </location>
</feature>
<feature type="disulfide bond" evidence="1">
    <location>
        <begin position="460"/>
        <end position="471"/>
    </location>
</feature>
<feature type="disulfide bond" evidence="1">
    <location>
        <begin position="465"/>
        <end position="480"/>
    </location>
</feature>
<feature type="disulfide bond" evidence="1">
    <location>
        <begin position="482"/>
        <end position="491"/>
    </location>
</feature>
<feature type="disulfide bond" evidence="1">
    <location>
        <begin position="498"/>
        <end position="509"/>
    </location>
</feature>
<feature type="disulfide bond" evidence="1">
    <location>
        <begin position="503"/>
        <end position="518"/>
    </location>
</feature>
<feature type="disulfide bond" evidence="1">
    <location>
        <begin position="520"/>
        <end position="529"/>
    </location>
</feature>
<feature type="disulfide bond" evidence="1">
    <location>
        <begin position="536"/>
        <end position="547"/>
    </location>
</feature>
<feature type="disulfide bond" evidence="1">
    <location>
        <begin position="541"/>
        <end position="556"/>
    </location>
</feature>
<feature type="disulfide bond" evidence="1">
    <location>
        <begin position="558"/>
        <end position="567"/>
    </location>
</feature>
<feature type="disulfide bond" evidence="1">
    <location>
        <begin position="574"/>
        <end position="584"/>
    </location>
</feature>
<feature type="disulfide bond" evidence="1">
    <location>
        <begin position="579"/>
        <end position="593"/>
    </location>
</feature>
<feature type="disulfide bond" evidence="1">
    <location>
        <begin position="595"/>
        <end position="604"/>
    </location>
</feature>
<feature type="disulfide bond" evidence="1">
    <location>
        <begin position="611"/>
        <end position="622"/>
    </location>
</feature>
<feature type="disulfide bond" evidence="1">
    <location>
        <begin position="616"/>
        <end position="631"/>
    </location>
</feature>
<feature type="disulfide bond" evidence="1">
    <location>
        <begin position="633"/>
        <end position="642"/>
    </location>
</feature>
<feature type="disulfide bond" evidence="1">
    <location>
        <begin position="649"/>
        <end position="659"/>
    </location>
</feature>
<feature type="disulfide bond" evidence="1">
    <location>
        <begin position="654"/>
        <end position="668"/>
    </location>
</feature>
<feature type="disulfide bond" evidence="1">
    <location>
        <begin position="670"/>
        <end position="679"/>
    </location>
</feature>
<feature type="disulfide bond" evidence="1">
    <location>
        <begin position="686"/>
        <end position="697"/>
    </location>
</feature>
<feature type="disulfide bond" evidence="1">
    <location>
        <begin position="691"/>
        <end position="706"/>
    </location>
</feature>
<feature type="disulfide bond" evidence="1">
    <location>
        <begin position="708"/>
        <end position="717"/>
    </location>
</feature>
<feature type="disulfide bond" evidence="1">
    <location>
        <begin position="724"/>
        <end position="734"/>
    </location>
</feature>
<feature type="disulfide bond" evidence="1">
    <location>
        <begin position="729"/>
        <end position="743"/>
    </location>
</feature>
<feature type="disulfide bond" evidence="1">
    <location>
        <begin position="745"/>
        <end position="754"/>
    </location>
</feature>
<feature type="disulfide bond" evidence="1">
    <location>
        <begin position="761"/>
        <end position="772"/>
    </location>
</feature>
<feature type="disulfide bond" evidence="1">
    <location>
        <begin position="766"/>
        <end position="781"/>
    </location>
</feature>
<feature type="disulfide bond" evidence="1">
    <location>
        <begin position="783"/>
        <end position="792"/>
    </location>
</feature>
<feature type="disulfide bond" evidence="1">
    <location>
        <begin position="799"/>
        <end position="810"/>
    </location>
</feature>
<feature type="disulfide bond" evidence="1">
    <location>
        <begin position="804"/>
        <end position="819"/>
    </location>
</feature>
<feature type="disulfide bond" evidence="1">
    <location>
        <begin position="821"/>
        <end position="830"/>
    </location>
</feature>
<feature type="disulfide bond" evidence="1">
    <location>
        <begin position="837"/>
        <end position="848"/>
    </location>
</feature>
<feature type="disulfide bond" evidence="1">
    <location>
        <begin position="842"/>
        <end position="859"/>
    </location>
</feature>
<feature type="disulfide bond" evidence="1">
    <location>
        <begin position="861"/>
        <end position="870"/>
    </location>
</feature>
<feature type="disulfide bond" evidence="1">
    <location>
        <begin position="877"/>
        <end position="888"/>
    </location>
</feature>
<feature type="disulfide bond" evidence="1">
    <location>
        <begin position="882"/>
        <end position="897"/>
    </location>
</feature>
<feature type="disulfide bond" evidence="1">
    <location>
        <begin position="899"/>
        <end position="908"/>
    </location>
</feature>
<feature type="disulfide bond" evidence="1">
    <location>
        <begin position="915"/>
        <end position="926"/>
    </location>
</feature>
<feature type="disulfide bond" evidence="1">
    <location>
        <begin position="920"/>
        <end position="935"/>
    </location>
</feature>
<feature type="disulfide bond" evidence="1">
    <location>
        <begin position="937"/>
        <end position="946"/>
    </location>
</feature>
<feature type="disulfide bond" evidence="1">
    <location>
        <begin position="953"/>
        <end position="964"/>
    </location>
</feature>
<feature type="disulfide bond" evidence="1">
    <location>
        <begin position="958"/>
        <end position="973"/>
    </location>
</feature>
<feature type="disulfide bond" evidence="1">
    <location>
        <begin position="975"/>
        <end position="984"/>
    </location>
</feature>
<feature type="disulfide bond" evidence="1">
    <location>
        <begin position="991"/>
        <end position="1002"/>
    </location>
</feature>
<feature type="disulfide bond" evidence="1">
    <location>
        <begin position="996"/>
        <end position="1011"/>
    </location>
</feature>
<feature type="disulfide bond" evidence="1">
    <location>
        <begin position="1013"/>
        <end position="1022"/>
    </location>
</feature>
<feature type="disulfide bond" evidence="1">
    <location>
        <begin position="1029"/>
        <end position="1040"/>
    </location>
</feature>
<feature type="disulfide bond" evidence="1">
    <location>
        <begin position="1034"/>
        <end position="1049"/>
    </location>
</feature>
<feature type="disulfide bond" evidence="1">
    <location>
        <begin position="1051"/>
        <end position="1060"/>
    </location>
</feature>
<feature type="disulfide bond" evidence="1">
    <location>
        <begin position="1067"/>
        <end position="1078"/>
    </location>
</feature>
<feature type="disulfide bond" evidence="1">
    <location>
        <begin position="1072"/>
        <end position="1087"/>
    </location>
</feature>
<feature type="disulfide bond" evidence="1">
    <location>
        <begin position="1089"/>
        <end position="1098"/>
    </location>
</feature>
<feature type="disulfide bond" evidence="28">
    <location>
        <begin position="1105"/>
        <end position="1126"/>
    </location>
</feature>
<feature type="disulfide bond" evidence="1">
    <location>
        <begin position="1120"/>
        <end position="1135"/>
    </location>
</feature>
<feature type="disulfide bond" evidence="1">
    <location>
        <begin position="1137"/>
        <end position="1146"/>
    </location>
</feature>
<feature type="disulfide bond" evidence="1">
    <location>
        <begin position="1153"/>
        <end position="1164"/>
    </location>
</feature>
<feature type="disulfide bond" evidence="1">
    <location>
        <begin position="1158"/>
        <end position="1173"/>
    </location>
</feature>
<feature type="disulfide bond" evidence="1">
    <location>
        <begin position="1175"/>
        <end position="1184"/>
    </location>
</feature>
<feature type="disulfide bond" evidence="1">
    <location>
        <begin position="1191"/>
        <end position="1202"/>
    </location>
</feature>
<feature type="disulfide bond" evidence="1">
    <location>
        <begin position="1196"/>
        <end position="1211"/>
    </location>
</feature>
<feature type="disulfide bond" evidence="1">
    <location>
        <begin position="1213"/>
        <end position="1222"/>
    </location>
</feature>
<feature type="disulfide bond" evidence="1">
    <location>
        <begin position="1229"/>
        <end position="1241"/>
    </location>
</feature>
<feature type="disulfide bond" evidence="1">
    <location>
        <begin position="1235"/>
        <end position="1250"/>
    </location>
</feature>
<feature type="disulfide bond" evidence="1">
    <location>
        <begin position="1252"/>
        <end position="1261"/>
    </location>
</feature>
<feature type="disulfide bond" evidence="1">
    <location>
        <begin position="1268"/>
        <end position="1281"/>
    </location>
</feature>
<feature type="disulfide bond" evidence="1">
    <location>
        <begin position="1273"/>
        <end position="1290"/>
    </location>
</feature>
<feature type="disulfide bond" evidence="1">
    <location>
        <begin position="1292"/>
        <end position="1301"/>
    </location>
</feature>
<feature type="disulfide bond" evidence="1">
    <location>
        <begin position="1308"/>
        <end position="1319"/>
    </location>
</feature>
<feature type="disulfide bond" evidence="1">
    <location>
        <begin position="1313"/>
        <end position="1331"/>
    </location>
</feature>
<feature type="disulfide bond" evidence="1">
    <location>
        <begin position="1333"/>
        <end position="1342"/>
    </location>
</feature>
<feature type="disulfide bond" evidence="1">
    <location>
        <begin position="1378"/>
        <end position="1389"/>
    </location>
</feature>
<feature type="disulfide bond" evidence="1">
    <location>
        <begin position="1383"/>
        <end position="1400"/>
    </location>
</feature>
<feature type="disulfide bond" evidence="1">
    <location>
        <begin position="1402"/>
        <end position="1411"/>
    </location>
</feature>
<feature type="disulfide bond" evidence="11">
    <location>
        <begin position="1425"/>
        <end position="1448"/>
    </location>
</feature>
<feature type="disulfide bond" evidence="11">
    <location>
        <begin position="1430"/>
        <end position="1443"/>
    </location>
</feature>
<feature type="disulfide bond" evidence="11">
    <location>
        <begin position="1439"/>
        <end position="1455"/>
    </location>
</feature>
<feature type="disulfide bond" evidence="11">
    <location>
        <begin position="1466"/>
        <end position="1489"/>
    </location>
</feature>
<feature type="disulfide bond" evidence="11">
    <location>
        <begin position="1472"/>
        <end position="1484"/>
    </location>
</feature>
<feature type="disulfide bond" evidence="11">
    <location>
        <begin position="1480"/>
        <end position="1496"/>
    </location>
</feature>
<feature type="disulfide bond" evidence="11">
    <location>
        <begin position="1503"/>
        <end position="1527"/>
    </location>
</feature>
<feature type="disulfide bond" evidence="11">
    <location>
        <begin position="1509"/>
        <end position="1522"/>
    </location>
</feature>
<feature type="disulfide bond" evidence="11">
    <location>
        <begin position="1518"/>
        <end position="1534"/>
    </location>
</feature>
<feature type="disulfide bond" evidence="11">
    <location>
        <begin position="1632"/>
        <end position="1639"/>
    </location>
</feature>
<feature type="sequence variant" id="VAR_029361" description="In ALGS2; dbSNP:rs111033632." evidence="10">
    <original>C</original>
    <variation>Y</variation>
    <location>
        <position position="444"/>
    </location>
</feature>
<feature type="sequence variant" id="VAR_031463" description="In dbSNP:rs17024517.">
    <original>V</original>
    <variation>F</variation>
    <location>
        <position position="1667"/>
    </location>
</feature>
<feature type="sequence variant" id="VAR_080195" description="In HJCYS." evidence="15">
    <location>
        <begin position="2140"/>
        <end position="2471"/>
    </location>
</feature>
<feature type="sequence variant" id="VAR_080196" description="In HJCYS." evidence="20">
    <location>
        <begin position="2196"/>
        <end position="2471"/>
    </location>
</feature>
<feature type="sequence variant" id="VAR_080197" description="In HJCYS." evidence="15 17">
    <location>
        <begin position="2208"/>
        <end position="2471"/>
    </location>
</feature>
<feature type="sequence variant" id="VAR_080198" description="In HJCYS." evidence="17">
    <location>
        <begin position="2223"/>
        <end position="2471"/>
    </location>
</feature>
<feature type="sequence variant" id="VAR_080199" description="In HJCYS." evidence="16">
    <location>
        <begin position="2285"/>
        <end position="2471"/>
    </location>
</feature>
<feature type="sequence variant" id="VAR_080200" description="In HJCYS." evidence="18">
    <location>
        <begin position="2299"/>
        <end position="2471"/>
    </location>
</feature>
<feature type="sequence variant" id="VAR_080201" description="In HJCYS; loss of interaction with FBW7; decreased ubiquitination." evidence="16 22">
    <location>
        <begin position="2317"/>
        <end position="2471"/>
    </location>
</feature>
<feature type="sequence variant" id="VAR_080202" description="In HJCYS." evidence="15">
    <location>
        <begin position="2325"/>
        <end position="2471"/>
    </location>
</feature>
<feature type="sequence variant" id="VAR_080203" description="In HJCYS." evidence="17">
    <location>
        <begin position="2360"/>
        <end position="2471"/>
    </location>
</feature>
<feature type="sequence variant" id="VAR_080204" description="In HJCYS." evidence="16">
    <location>
        <begin position="2373"/>
        <end position="2471"/>
    </location>
</feature>
<feature type="sequence variant" id="VAR_080205" description="In HJCYS." evidence="18">
    <location>
        <begin position="2389"/>
        <end position="2471"/>
    </location>
</feature>
<feature type="sequence variant" id="VAR_080206" description="In HJCYS." evidence="15 19 20">
    <location>
        <begin position="2400"/>
        <end position="2471"/>
    </location>
</feature>
<feature type="mutagenesis site" description="Loss of interaction with FBW7. Results in decreased ubiquitination and degradation." evidence="22">
    <original>T</original>
    <variation>A</variation>
    <location>
        <position position="2416"/>
    </location>
</feature>
<feature type="sequence conflict" description="In Ref. 2; AAG37073." evidence="28" ref="2">
    <original>A</original>
    <variation>T</variation>
    <location>
        <position position="21"/>
    </location>
</feature>
<feature type="sequence conflict" description="In Ref. 2; AAG37073." evidence="28" ref="2">
    <original>P</original>
    <variation>L</variation>
    <location>
        <position position="210"/>
    </location>
</feature>
<feature type="sequence conflict" description="In Ref. 4; AAB19224." evidence="28" ref="4">
    <original>E</original>
    <variation>D</variation>
    <location>
        <position position="1037"/>
    </location>
</feature>
<feature type="sequence conflict" description="In Ref. 4; AAB19224." evidence="28" ref="4">
    <original>ES</original>
    <variation>SP</variation>
    <location>
        <begin position="1084"/>
        <end position="1085"/>
    </location>
</feature>
<feature type="sequence conflict" description="In Ref. 4; AAB19224." evidence="28" ref="4">
    <original>A</original>
    <variation>V</variation>
    <location>
        <position position="1094"/>
    </location>
</feature>
<feature type="sequence conflict" description="In Ref. 4; AAB19224." evidence="28" ref="4">
    <original>L</original>
    <variation>V</variation>
    <location>
        <position position="1139"/>
    </location>
</feature>
<feature type="sequence conflict" description="In Ref. 1; AAA36377." evidence="28" ref="1">
    <original>D</original>
    <variation>N</variation>
    <location>
        <position position="1519"/>
    </location>
</feature>
<feature type="sequence conflict" description="In Ref. 2; AAG37073." evidence="28" ref="2">
    <original>R</original>
    <variation>H</variation>
    <location>
        <position position="2053"/>
    </location>
</feature>
<feature type="turn" evidence="35">
    <location>
        <begin position="418"/>
        <end position="420"/>
    </location>
</feature>
<feature type="strand" evidence="35">
    <location>
        <begin position="426"/>
        <end position="428"/>
    </location>
</feature>
<feature type="strand" evidence="35">
    <location>
        <begin position="432"/>
        <end position="436"/>
    </location>
</feature>
<feature type="strand" evidence="35">
    <location>
        <begin position="439"/>
        <end position="443"/>
    </location>
</feature>
<feature type="strand" evidence="35">
    <location>
        <begin position="448"/>
        <end position="450"/>
    </location>
</feature>
<feature type="helix" evidence="35">
    <location>
        <begin position="459"/>
        <end position="462"/>
    </location>
</feature>
<feature type="strand" evidence="35">
    <location>
        <begin position="470"/>
        <end position="474"/>
    </location>
</feature>
<feature type="strand" evidence="35">
    <location>
        <begin position="477"/>
        <end position="481"/>
    </location>
</feature>
<feature type="strand" evidence="35">
    <location>
        <begin position="486"/>
        <end position="488"/>
    </location>
</feature>
<feature type="helix" evidence="35">
    <location>
        <begin position="497"/>
        <end position="500"/>
    </location>
</feature>
<feature type="strand" evidence="35">
    <location>
        <begin position="508"/>
        <end position="512"/>
    </location>
</feature>
<feature type="strand" evidence="35">
    <location>
        <begin position="515"/>
        <end position="519"/>
    </location>
</feature>
<feature type="helix" evidence="34">
    <location>
        <begin position="1428"/>
        <end position="1433"/>
    </location>
</feature>
<feature type="strand" evidence="34">
    <location>
        <begin position="1436"/>
        <end position="1438"/>
    </location>
</feature>
<feature type="helix" evidence="34">
    <location>
        <begin position="1441"/>
        <end position="1443"/>
    </location>
</feature>
<feature type="turn" evidence="34">
    <location>
        <begin position="1446"/>
        <end position="1448"/>
    </location>
</feature>
<feature type="helix" evidence="34">
    <location>
        <begin position="1449"/>
        <end position="1452"/>
    </location>
</feature>
<feature type="turn" evidence="34">
    <location>
        <begin position="1453"/>
        <end position="1458"/>
    </location>
</feature>
<feature type="turn" evidence="34">
    <location>
        <begin position="1462"/>
        <end position="1465"/>
    </location>
</feature>
<feature type="helix" evidence="34">
    <location>
        <begin position="1472"/>
        <end position="1474"/>
    </location>
</feature>
<feature type="strand" evidence="34">
    <location>
        <begin position="1477"/>
        <end position="1479"/>
    </location>
</feature>
<feature type="helix" evidence="34">
    <location>
        <begin position="1482"/>
        <end position="1484"/>
    </location>
</feature>
<feature type="turn" evidence="34">
    <location>
        <begin position="1487"/>
        <end position="1490"/>
    </location>
</feature>
<feature type="helix" evidence="34">
    <location>
        <begin position="1491"/>
        <end position="1494"/>
    </location>
</feature>
<feature type="helix" evidence="34">
    <location>
        <begin position="1506"/>
        <end position="1512"/>
    </location>
</feature>
<feature type="strand" evidence="34">
    <location>
        <begin position="1515"/>
        <end position="1517"/>
    </location>
</feature>
<feature type="helix" evidence="34">
    <location>
        <begin position="1520"/>
        <end position="1522"/>
    </location>
</feature>
<feature type="helix" evidence="34">
    <location>
        <begin position="1525"/>
        <end position="1532"/>
    </location>
</feature>
<feature type="strand" evidence="34">
    <location>
        <begin position="1544"/>
        <end position="1553"/>
    </location>
</feature>
<feature type="helix" evidence="34">
    <location>
        <begin position="1555"/>
        <end position="1560"/>
    </location>
</feature>
<feature type="helix" evidence="34">
    <location>
        <begin position="1562"/>
        <end position="1573"/>
    </location>
</feature>
<feature type="strand" evidence="34">
    <location>
        <begin position="1575"/>
        <end position="1579"/>
    </location>
</feature>
<feature type="strand" evidence="34">
    <location>
        <begin position="1589"/>
        <end position="1595"/>
    </location>
</feature>
<feature type="strand" evidence="34">
    <location>
        <begin position="1618"/>
        <end position="1628"/>
    </location>
</feature>
<feature type="helix" evidence="34">
    <location>
        <begin position="1632"/>
        <end position="1635"/>
    </location>
</feature>
<feature type="helix" evidence="34">
    <location>
        <begin position="1643"/>
        <end position="1656"/>
    </location>
</feature>
<feature type="strand" evidence="34">
    <location>
        <begin position="1663"/>
        <end position="1670"/>
    </location>
</feature>
<keyword id="KW-0002">3D-structure</keyword>
<keyword id="KW-0010">Activator</keyword>
<keyword id="KW-0040">ANK repeat</keyword>
<keyword id="KW-1003">Cell membrane</keyword>
<keyword id="KW-0963">Cytoplasm</keyword>
<keyword id="KW-0217">Developmental protein</keyword>
<keyword id="KW-0221">Differentiation</keyword>
<keyword id="KW-0225">Disease variant</keyword>
<keyword id="KW-1015">Disulfide bond</keyword>
<keyword id="KW-0245">EGF-like domain</keyword>
<keyword id="KW-0325">Glycoprotein</keyword>
<keyword id="KW-0472">Membrane</keyword>
<keyword id="KW-0914">Notch signaling pathway</keyword>
<keyword id="KW-0539">Nucleus</keyword>
<keyword id="KW-1285">Osteoporosis</keyword>
<keyword id="KW-0597">Phosphoprotein</keyword>
<keyword id="KW-1267">Proteomics identification</keyword>
<keyword id="KW-0675">Receptor</keyword>
<keyword id="KW-1185">Reference proteome</keyword>
<keyword id="KW-0677">Repeat</keyword>
<keyword id="KW-0732">Signal</keyword>
<keyword id="KW-0804">Transcription</keyword>
<keyword id="KW-0805">Transcription regulation</keyword>
<keyword id="KW-0812">Transmembrane</keyword>
<keyword id="KW-1133">Transmembrane helix</keyword>
<keyword id="KW-0832">Ubl conjugation</keyword>
<sequence>MPALRPALLWALLALWLCCAAPAHALQCRDGYEPCVNEGMCVTYHNGTGYCKCPEGFLGEYCQHRDPCEKNRCQNGGTCVAQAMLGKATCRCASGFTGEDCQYSTSHPCFVSRPCLNGGTCHMLSRDTYECTCQVGFTGKECQWTDACLSHPCANGSTCTTVANQFSCKCLTGFTGQKCETDVNECDIPGHCQHGGTCLNLPGSYQCQCPQGFTGQYCDSLYVPCAPSPCVNGGTCRQTGDFTFECNCLPGFEGSTCERNIDDCPNHRCQNGGVCVDGVNTYNCRCPPQWTGQFCTEDVDECLLQPNACQNGGTCANRNGGYGCVCVNGWSGDDCSENIDDCAFASCTPGSTCIDRVASFSCMCPEGKAGLLCHLDDACISNPCHKGALCDTNPLNGQYICTCPQGYKGADCTEDVDECAMANSNPCEHAGKCVNTDGAFHCECLKGYAGPRCEMDINECHSDPCQNDATCLDKIGGFTCLCMPGFKGVHCELEINECQSNPCVNNGQCVDKVNRFQCLCPPGFTGPVCQIDIDDCSSTPCLNGAKCIDHPNGYECQCATGFTGVLCEENIDNCDPDPCHHGQCQDGIDSYTCICNPGYMGAICSDQIDECYSSPCLNDGRCIDLVNGYQCNCQPGTSGVNCEINFDDCASNPCIHGICMDGINRYSCVCSPGFTGQRCNIDIDECASNPCRKGATCINGVNGFRCICPEGPHHPSCYSQVNECLSNPCIHGNCTGGLSGYKCLCDAGWVGINCEVDKNECLSNPCQNGGTCDNLVNGYRCTCKKGFKGYNCQVNIDECASNPCLNQGTCFDDISGYTCHCVLPYTGKNCQTVLAPCSPNPCENAAVCKESPNFESYTCLCAPGWQGQRCTIDIDECISKPCMNHGLCHNTQGSYMCECPPGFSGMDCEEDIDDCLANPCQNGGSCMDGVNTFSCLCLPGFTGDKCQTDMNECLSEPCKNGGTCSDYVNSYTCKCQAGFDGVHCENNINECTESSCFNGGTCVDGINSFSCLCPVGFTGSFCLHEINECSSHPCLNEGTCVDGLGTYRCSCPLGYTGKNCQTLVNLCSRSPCKNKGTCVQKKAESQCLCPSGWAGAYCDVPNVSCDIAASRRGVLVEHLCQHSGVCINAGNTHYCQCPLGYTGSYCEEQLDECASNPCQHGATCSDFIGGYRCECVPGYQGVNCEYEVDECQNQPCQNGGTCIDLVNHFKCSCPPGTRGLLCEENIDDCARGPHCLNGGQCMDRIGGYSCRCLPGFAGERCEGDINECLSNPCSSEGSLDCIQLTNDYLCVCRSAFTGRHCETFVDVCPQMPCLNGGTCAVASNMPDGFICRCPPGFSGARCQSSCGQVKCRKGEQCVHTASGPRCFCPSPRDCESGCASSPCQHGGSCHPQRQPPYYSCQCAPPFSGSRCELYTAPPSTPPATCLSQYCADKARDGVCDEACNSHACQWDGGDCSLTMENPWANCSSPLPCWDYINNQCDELCNTVECLFDNFECQGNSKTCKYDKYCADHFKDNHCDQGCNSEECGWDGLDCAADQPENLAEGTLVIVVLMPPEQLLQDARSFLRALGTLLHTNLRIKRDSQGELMVYPYYGEKSAAMKKQRMTRRSLPGEQEQEVAGSKVFLEIDNRQCVQDSDHCFKNTDAAAALLASHAIQGTLSYPLVSVVSESLTPERTQLLYLLAVAVVIILFIILLGVIMAKRKRKHGSLWLPEGFTLRRDASNHKRREPVGQDAVGLKNLSVQVSEANLIGTGTSEHWVDDEGPQPKKVKAEDEALLSEEDDPIDRRPWTQQHLEAADIRRTPSLALTPPQAEQEVDVLDVNVRGPDGCTPLMLASLRGGSSDLSDEDEDAEDSSANIITDLVYQGASLQAQTDRTGEMALHLAARYSRADAAKRLLDAGADANAQDNMGRCPLHAAVAADAQGVFQILIRNRVTDLDARMNDGTTPLILAARLAVEGMVAELINCQADVNAVDDHGKSALHWAAAVNNVEATLLLLKNGANRDMQDNKEETPLFLAAREGSYEAAKILLDHFANRDITDHMDRLPRDVARDRMHHDIVRLLDEYNVTPSPPGTVLTSALSPVICGPNRSFLSLKHTPMGKKSRRPSAKSTMPTSLPNLAKEAKDAKGSRRKKSLSEKVQLSESSVTLSPVDSLESPHTYVSDTTSSPMITSPGILQASPNPMLATAAPPAPVHAQHALSFSNLHEMQPLAHGASTVLPSVSQLLSHHHIVSPGSGSAGSLSRLHPVPVPADWMNRMEVNETQYNEMFGMVLAPAEGTHPGIAPQSRPPEGKHITTPREPLPPIVTFQLIPKGSIAQPAGAPQPQSTCPPAVAGPLPTMYQIPEMARLPSVAFPTAMMPQQDGQVAQTILPAYHPFPASVGKYPTPPSQHSYASSNAAERTPSHSGHLQGEHPYLTPSPESPDQWSSSSPHSASDWSDVTTSPTPGGAGGGQRGPGTHMSEPPHNNMQVYA</sequence>
<evidence type="ECO:0000250" key="1"/>
<evidence type="ECO:0000250" key="2">
    <source>
        <dbReference type="UniProtKB" id="O35516"/>
    </source>
</evidence>
<evidence type="ECO:0000250" key="3">
    <source>
        <dbReference type="UniProtKB" id="Q01705"/>
    </source>
</evidence>
<evidence type="ECO:0000250" key="4">
    <source>
        <dbReference type="UniProtKB" id="Q9QW30"/>
    </source>
</evidence>
<evidence type="ECO:0000255" key="5"/>
<evidence type="ECO:0000255" key="6">
    <source>
        <dbReference type="PROSITE-ProRule" id="PRU00076"/>
    </source>
</evidence>
<evidence type="ECO:0000256" key="7">
    <source>
        <dbReference type="SAM" id="MobiDB-lite"/>
    </source>
</evidence>
<evidence type="ECO:0000269" key="8">
    <source>
    </source>
</evidence>
<evidence type="ECO:0000269" key="9">
    <source>
    </source>
</evidence>
<evidence type="ECO:0000269" key="10">
    <source>
    </source>
</evidence>
<evidence type="ECO:0000269" key="11">
    <source>
    </source>
</evidence>
<evidence type="ECO:0000269" key="12">
    <source>
    </source>
</evidence>
<evidence type="ECO:0000269" key="13">
    <source>
    </source>
</evidence>
<evidence type="ECO:0000269" key="14">
    <source>
    </source>
</evidence>
<evidence type="ECO:0000269" key="15">
    <source>
    </source>
</evidence>
<evidence type="ECO:0000269" key="16">
    <source>
    </source>
</evidence>
<evidence type="ECO:0000269" key="17">
    <source>
    </source>
</evidence>
<evidence type="ECO:0000269" key="18">
    <source>
    </source>
</evidence>
<evidence type="ECO:0000269" key="19">
    <source>
    </source>
</evidence>
<evidence type="ECO:0000269" key="20">
    <source>
    </source>
</evidence>
<evidence type="ECO:0000269" key="21">
    <source>
    </source>
</evidence>
<evidence type="ECO:0000269" key="22">
    <source>
    </source>
</evidence>
<evidence type="ECO:0000269" key="23">
    <source>
    </source>
</evidence>
<evidence type="ECO:0000269" key="24">
    <source>
    </source>
</evidence>
<evidence type="ECO:0000269" key="25">
    <source>
    </source>
</evidence>
<evidence type="ECO:0000269" key="26">
    <source>
    </source>
</evidence>
<evidence type="ECO:0000303" key="27">
    <source>
    </source>
</evidence>
<evidence type="ECO:0000305" key="28"/>
<evidence type="ECO:0000312" key="29">
    <source>
        <dbReference type="HGNC" id="HGNC:7882"/>
    </source>
</evidence>
<evidence type="ECO:0007744" key="30">
    <source>
    </source>
</evidence>
<evidence type="ECO:0007744" key="31">
    <source>
    </source>
</evidence>
<evidence type="ECO:0007744" key="32">
    <source>
    </source>
</evidence>
<evidence type="ECO:0007744" key="33">
    <source>
    </source>
</evidence>
<evidence type="ECO:0007829" key="34">
    <source>
        <dbReference type="PDB" id="2OO4"/>
    </source>
</evidence>
<evidence type="ECO:0007829" key="35">
    <source>
        <dbReference type="PDB" id="5MWB"/>
    </source>
</evidence>
<name>NOTC2_HUMAN</name>